<accession>P11532</accession>
<accession>A0A075B6G3</accession>
<accession>A1L0U9</accession>
<accession>E7EQR9</accession>
<accession>E7EQS5</accession>
<accession>E7ESB2</accession>
<accession>E9PDN1</accession>
<accession>E9PDN5</accession>
<accession>F5GZY3</accession>
<accession>F8VX32</accession>
<accession>Q02295</accession>
<accession>Q14169</accession>
<accession>Q14170</accession>
<accession>Q5JYU0</accession>
<accession>Q6NSJ9</accession>
<accession>Q7KZ48</accession>
<accession>Q8N754</accession>
<accession>Q9UCW3</accession>
<accession>Q9UCW4</accession>
<keyword id="KW-0002">3D-structure</keyword>
<keyword id="KW-0009">Actin-binding</keyword>
<keyword id="KW-0877">Alternative promoter usage</keyword>
<keyword id="KW-0025">Alternative splicing</keyword>
<keyword id="KW-0106">Calcium</keyword>
<keyword id="KW-0122">Cardiomyopathy</keyword>
<keyword id="KW-1003">Cell membrane</keyword>
<keyword id="KW-0963">Cytoplasm</keyword>
<keyword id="KW-0206">Cytoskeleton</keyword>
<keyword id="KW-0225">Disease variant</keyword>
<keyword id="KW-0472">Membrane</keyword>
<keyword id="KW-0479">Metal-binding</keyword>
<keyword id="KW-0597">Phosphoprotein</keyword>
<keyword id="KW-0628">Postsynaptic cell membrane</keyword>
<keyword id="KW-1267">Proteomics identification</keyword>
<keyword id="KW-1185">Reference proteome</keyword>
<keyword id="KW-0677">Repeat</keyword>
<keyword id="KW-0770">Synapse</keyword>
<keyword id="KW-0862">Zinc</keyword>
<keyword id="KW-0863">Zinc-finger</keyword>
<comment type="function">
    <text evidence="3 17">Anchors the extracellular matrix to the cytoskeleton via F-actin. Ligand for dystroglycan. Component of the dystrophin-associated glycoprotein complex which accumulates at the neuromuscular junction (NMJ) and at a variety of synapses in the peripheral and central nervous systems and has a structural function in stabilizing the sarcolemma. Also implicated in signaling events and synaptic transmission.</text>
</comment>
<comment type="subunit">
    <text evidence="2 3 9 10 16 25 26 34">Interacts with SYNM (By similarity). Interacts with the syntrophins SNTA1, SNTB1, SNTB2, SNTG1 and SNTG2 (PubMed:7844150, PubMed:8576247). Interacts with KRT19 (PubMed:16000376). Component of the dystrophin-associated glycoprotein complex which is composed of three subcomplexes: a cytoplasmic complex comprised of DMD (or UTRN), DTNA and a number of syntrophins, such as SNTB1, SNTB2, SNTG1 and SNTG2, the transmembrane dystroglycan complex, and the sarcoglycan-sarcospan complex. Interacts with DAG1 (betaDAG1) with DMD; the interaction is inhibited by phosphorylation on the PPXY motif of DAG1 (PubMed:10932245, PubMed:11495720, PubMed:7592992). Interacts with CMYA5 (By similarity). Directly interacts with ANK2 and ANK3; these interactions do not interfere with betaDAG1-binding and are necessary for proper localization in muscle cells (By similarity). Identified in a dystroglycan complex that contains at least PRX, DRP2, UTRN, DMD and DAG1 (By similarity). Interacts with DTNB (By similarity). Interacts with PGM5; the interaction is direct (By similarity). Interacts with NOS1; localizes NOS1 to sarcolemma in muscle cells (By similarity).</text>
</comment>
<comment type="interaction">
    <interactant intactId="EBI-295827">
        <id>P11532</id>
    </interactant>
    <interactant intactId="EBI-514206">
        <id>Q9UBT7</id>
        <label>CTNNAL1</label>
    </interactant>
    <organismsDiffer>false</organismsDiffer>
    <experiments>10</experiments>
</comment>
<comment type="interaction">
    <interactant intactId="EBI-295827">
        <id>P11532</id>
    </interactant>
    <interactant intactId="EBI-949471">
        <id>Q9Y4J8</id>
        <label>DTNA</label>
    </interactant>
    <organismsDiffer>false</organismsDiffer>
    <experiments>5</experiments>
</comment>
<comment type="interaction">
    <interactant intactId="EBI-295827">
        <id>P11532</id>
    </interactant>
    <interactant intactId="EBI-740402">
        <id>O60941</id>
        <label>DTNB</label>
    </interactant>
    <organismsDiffer>false</organismsDiffer>
    <experiments>6</experiments>
</comment>
<comment type="interaction">
    <interactant intactId="EBI-295827">
        <id>P11532</id>
    </interactant>
    <interactant intactId="EBI-11984733">
        <id>O60941-5</id>
        <label>DTNB</label>
    </interactant>
    <organismsDiffer>false</organismsDiffer>
    <experiments>3</experiments>
</comment>
<comment type="interaction">
    <interactant intactId="EBI-295827">
        <id>P11532</id>
    </interactant>
    <interactant intactId="EBI-2514791">
        <id>Q96CS2</id>
        <label>HAUS1</label>
    </interactant>
    <organismsDiffer>false</organismsDiffer>
    <experiments>5</experiments>
</comment>
<comment type="interaction">
    <interactant intactId="EBI-295827">
        <id>P11532</id>
    </interactant>
    <interactant intactId="EBI-12690684">
        <id>P41235-3</id>
        <label>HNF4A</label>
    </interactant>
    <organismsDiffer>false</organismsDiffer>
    <experiments>3</experiments>
</comment>
<comment type="interaction">
    <interactant intactId="EBI-295827">
        <id>P11532</id>
    </interactant>
    <interactant intactId="EBI-742756">
        <id>P08727</id>
        <label>KRT19</label>
    </interactant>
    <organismsDiffer>false</organismsDiffer>
    <experiments>2</experiments>
</comment>
<comment type="interaction">
    <interactant intactId="EBI-295827">
        <id>P11532</id>
    </interactant>
    <interactant intactId="EBI-79165">
        <id>Q9NRD5</id>
        <label>PICK1</label>
    </interactant>
    <organismsDiffer>false</organismsDiffer>
    <experiments>3</experiments>
</comment>
<comment type="interaction">
    <interactant intactId="EBI-295827">
        <id>P11532</id>
    </interactant>
    <interactant intactId="EBI-717191">
        <id>Q13424</id>
        <label>SNTA1</label>
    </interactant>
    <organismsDiffer>false</organismsDiffer>
    <experiments>5</experiments>
</comment>
<comment type="interaction">
    <interactant intactId="EBI-295827">
        <id>P11532</id>
    </interactant>
    <interactant intactId="EBI-295843">
        <id>Q13884</id>
        <label>SNTB1</label>
    </interactant>
    <organismsDiffer>false</organismsDiffer>
    <experiments>6</experiments>
</comment>
<comment type="interaction">
    <interactant intactId="EBI-295827">
        <id>P11532</id>
    </interactant>
    <interactant intactId="EBI-80411">
        <id>Q13425</id>
        <label>SNTB2</label>
    </interactant>
    <organismsDiffer>false</organismsDiffer>
    <experiments>5</experiments>
</comment>
<comment type="interaction">
    <interactant intactId="EBI-1018651">
        <id>P11532-5</id>
    </interactant>
    <interactant intactId="EBI-941975">
        <id>Q01484</id>
        <label>ANK2</label>
    </interactant>
    <organismsDiffer>false</organismsDiffer>
    <experiments>2</experiments>
</comment>
<comment type="interaction">
    <interactant intactId="EBI-1018651">
        <id>P11532-5</id>
    </interactant>
    <interactant intactId="EBI-2133962">
        <id>Q3T1J5</id>
        <label>Ank3</label>
    </interactant>
    <organismsDiffer>true</organismsDiffer>
    <experiments>2</experiments>
</comment>
<comment type="subcellular location">
    <subcellularLocation>
        <location evidence="3">Cell membrane</location>
        <location evidence="3">Sarcolemma</location>
        <topology evidence="3">Peripheral membrane protein</topology>
        <orientation evidence="3">Cytoplasmic side</orientation>
    </subcellularLocation>
    <subcellularLocation>
        <location evidence="3">Cytoplasm</location>
        <location evidence="3">Cytoskeleton</location>
    </subcellularLocation>
    <subcellularLocation>
        <location evidence="3">Postsynaptic cell membrane</location>
    </subcellularLocation>
    <text evidence="3">In muscle cells, sarcolemma localization requires the presence of ANK2, while localization to costameres requires the presence of ANK3. Localizes to neuromuscular junctions (NMJs). In adult muscle, NMJ localization depends upon ANK2 presence, but not in newborn animals.</text>
</comment>
<comment type="alternative products">
    <event type="alternative promoter"/>
    <event type="alternative splicing"/>
    <isoform>
        <id>P11532-1</id>
        <name>1</name>
        <name>Dystrophin-4</name>
        <name>Dp427m</name>
        <sequence type="displayed"/>
    </isoform>
    <isoform>
        <id>P11532-4</id>
        <name>2</name>
        <name>Dystrophin-3</name>
        <name>Dp427c</name>
        <sequence type="described" ref="VSP_006809"/>
    </isoform>
    <isoform>
        <id>P11532-11</id>
        <name>3</name>
        <name>Dp427p</name>
        <sequence type="described" ref="VSP_060274"/>
    </isoform>
    <isoform>
        <id>P11532-2</id>
        <name>4</name>
        <name>Dystrophin-1</name>
        <name>Dp260-1</name>
        <sequence type="described" ref="VSP_006806 VSP_006807"/>
    </isoform>
    <isoform>
        <id>P11532-3</id>
        <name>5</name>
        <name>Dystrophin-2</name>
        <name>Dp260-2</name>
        <sequence type="described" ref="VSP_006808 VSP_006807"/>
    </isoform>
    <isoform>
        <id>P11532-12</id>
        <name>6</name>
        <name>Dp140</name>
        <sequence type="described" ref="VSP_060275"/>
    </isoform>
    <isoform>
        <id>P11532-13</id>
        <name>7</name>
        <name>Dp140c</name>
        <sequence type="described" ref="VSP_060275 VSP_046319"/>
    </isoform>
    <isoform>
        <id>P11532-14</id>
        <name>8</name>
        <name>Dp140b</name>
        <sequence type="described" ref="VSP_060275 VSP_017493"/>
    </isoform>
    <isoform>
        <id>P11532-15</id>
        <name>9</name>
        <name>Dp140ab</name>
        <sequence type="described" ref="VSP_060275 VSP_017492 VSP_017493"/>
    </isoform>
    <isoform>
        <id>P11532-16</id>
        <name>10</name>
        <name>Dp140bc</name>
        <sequence type="described" ref="VSP_060275 VSP_046319 VSP_017493"/>
    </isoform>
    <isoform>
        <id>P11532-17</id>
        <name>11</name>
        <name>Dp116</name>
        <sequence type="described" ref="VSP_060276 VSP_060277"/>
    </isoform>
    <isoform>
        <id>P11532-7</id>
        <name>12</name>
        <name>Dp71</name>
        <sequence type="described" ref="VSP_017490 VSP_017491"/>
    </isoform>
    <isoform>
        <id>P11532-8</id>
        <name>13</name>
        <name>Dp71a</name>
        <sequence type="described" ref="VSP_017490 VSP_017491 VSP_017492"/>
    </isoform>
    <isoform>
        <id>P11532-6</id>
        <name>14</name>
        <name>Dp71b</name>
        <sequence type="described" ref="VSP_017490 VSP_017491 VSP_017493"/>
    </isoform>
    <isoform>
        <id>P11532-5</id>
        <name>15</name>
        <name>Dp71ab</name>
        <sequence type="described" ref="VSP_017490 VSP_017491 VSP_017492 VSP_017493"/>
    </isoform>
    <isoform>
        <id>P11532-9</id>
        <name>16</name>
        <name>Dp60</name>
        <name>Dp71delta110</name>
        <sequence type="described" ref="VSP_017490 VSP_017491 VSP_046319 VSP_017493"/>
    </isoform>
    <isoform>
        <id>P11532-18</id>
        <name>17</name>
        <name>Dp40</name>
        <sequence type="described" ref="VSP_017490 VSP_017491 VSP_060278"/>
    </isoform>
</comment>
<comment type="tissue specificity">
    <text evidence="14 16 33">Expressed in muscle fibers accumulating in the costameres of myoplasm at the sarcolemma. Expressed in brain, muscle, kidney, lung and testis. Most tissues contain transcripts of multiple isoforms. Isoform 15: Only isoform to be detected in heart and liver and is also expressed in brain, testis and hepatoma cells.</text>
</comment>
<comment type="developmental stage">
    <text evidence="37">Isoform 15: Expressed in embryonic neural tissue from the sixth week of development. Isoform 16: Detected in all embryonic tissues examined.</text>
</comment>
<comment type="disease" evidence="13 20 29 30 32 35 38">
    <disease id="DI-01509">
        <name>Duchenne muscular dystrophy</name>
        <acronym>DMD</acronym>
        <description>Most common form of muscular dystrophy; a sex-linked recessive disorder. It typically presents in boys aged 3 to 7 year as proximal muscle weakness causing waddling gait, toe-walking, lordosis, frequent falls, and difficulty in standing up and climbing up stairs. The pelvic girdle is affected first, then the shoulder girdle. Progression is steady and most patients are confined to a wheelchair by age of 10 or 12. Flexion contractures and scoliosis ultimately occur. About 50% of patients have a lower IQ than their genetic expectations would suggest. There is no treatment.</description>
        <dbReference type="MIM" id="310200"/>
    </disease>
    <text>The disease is caused by variants affecting the gene represented in this entry.</text>
</comment>
<comment type="disease" evidence="8 28 31">
    <disease id="DI-00178">
        <name>Becker muscular dystrophy</name>
        <acronym>BMD</acronym>
        <description>A neuromuscular disorder characterized by dystrophin deficiency. It appears between the age of 5 and 15 years with a proximal motor deficiency of variable progression. Heart involvement can be the initial sign. Becker muscular dystrophy has a more benign course than Duchenne muscular dystrophy.</description>
        <dbReference type="MIM" id="300376"/>
    </disease>
    <text>The disease is caused by variants affecting the gene represented in this entry.</text>
</comment>
<comment type="disease" evidence="12 21 36">
    <disease id="DI-00231">
        <name>Cardiomyopathy, dilated, 3B</name>
        <acronym>CMD3B</acronym>
        <description>A disorder characterized by ventricular dilation and impaired systolic function, resulting in congestive heart failure and arrhythmia. Patients are at risk of premature death. CMD3B is an X-linked disorder.</description>
        <dbReference type="MIM" id="302045"/>
    </disease>
    <text>The disease is caused by variants affecting the gene represented in this entry.</text>
</comment>
<comment type="miscellaneous">
    <text>The DMD gene is the largest known gene in humans. It is 2.4 million base-pairs in size, comprises 79 exons and takes over 16 hours to be transcribed and cotranscriptionally spliced.</text>
</comment>
<comment type="miscellaneous">
    <molecule>Isoform 1</molecule>
    <text>Produced by alternative promoter usage.</text>
</comment>
<comment type="miscellaneous">
    <molecule>Isoform 2</molecule>
    <text evidence="44">Produced by alternative promoter usage.</text>
</comment>
<comment type="miscellaneous">
    <molecule>Isoform 3</molecule>
    <text evidence="44">Produced by alternative promoter usage.</text>
</comment>
<comment type="miscellaneous">
    <molecule>Isoform 4</molecule>
    <text evidence="44">Produced by alternative promoter usage.</text>
</comment>
<comment type="miscellaneous">
    <molecule>Isoform 5</molecule>
    <text evidence="44">Produced by alternative splicing of isoform 4.</text>
</comment>
<comment type="miscellaneous">
    <molecule>Isoform 6</molecule>
    <text evidence="44">Produced by alternative promoter usage.</text>
</comment>
<comment type="miscellaneous">
    <molecule>Isoform 7</molecule>
    <text evidence="44">Produced by alternative splicing of isoform 6.</text>
</comment>
<comment type="miscellaneous">
    <molecule>Isoform 8</molecule>
    <text evidence="44">Produced by alternative splicing of isoform 6.</text>
</comment>
<comment type="miscellaneous">
    <molecule>Isoform 9</molecule>
    <text evidence="44">Produced by alternative splicing of isoform 6.</text>
</comment>
<comment type="miscellaneous">
    <molecule>Isoform 10</molecule>
    <text evidence="44">Produced by alternative splicing of isoform 6.</text>
</comment>
<comment type="miscellaneous">
    <molecule>Isoform 11</molecule>
    <text evidence="44">Produced by alternative promoter usage.</text>
</comment>
<comment type="miscellaneous">
    <molecule>Isoform 12</molecule>
    <text evidence="44">Produced by alternative promoter usage.</text>
</comment>
<comment type="miscellaneous">
    <molecule>Isoform 13</molecule>
    <text evidence="44">Produced by alternative splicing of isoform 12.</text>
</comment>
<comment type="miscellaneous">
    <molecule>Isoform 14</molecule>
    <text evidence="44">Produced by alternative splicing of isoform 12.</text>
</comment>
<comment type="miscellaneous">
    <molecule>Isoform 15</molecule>
    <text evidence="44">Produced by alternative splicing of isoform 12.</text>
</comment>
<comment type="miscellaneous">
    <molecule>Isoform 16</molecule>
    <text evidence="44">Produced by alternative splicing of isoform 12.</text>
</comment>
<comment type="miscellaneous">
    <molecule>Isoform 17</molecule>
    <text evidence="44">Produced by alternative splicing of isoform 12.</text>
</comment>
<comment type="online information" name="DMD">
    <link uri="https://www.dmd.nl/database.html"/>
    <text>Dystrophin Mutation Database</text>
</comment>
<comment type="online information" name="Wikipedia">
    <link uri="https://en.wikipedia.org/wiki/Dystrophin"/>
    <text>Dystrophin entry</text>
</comment>
<evidence type="ECO:0000250" key="1"/>
<evidence type="ECO:0000250" key="2">
    <source>
        <dbReference type="UniProtKB" id="P11530"/>
    </source>
</evidence>
<evidence type="ECO:0000250" key="3">
    <source>
        <dbReference type="UniProtKB" id="P11531"/>
    </source>
</evidence>
<evidence type="ECO:0000255" key="4">
    <source>
        <dbReference type="PROSITE-ProRule" id="PRU00044"/>
    </source>
</evidence>
<evidence type="ECO:0000255" key="5">
    <source>
        <dbReference type="PROSITE-ProRule" id="PRU00224"/>
    </source>
</evidence>
<evidence type="ECO:0000255" key="6">
    <source>
        <dbReference type="PROSITE-ProRule" id="PRU00228"/>
    </source>
</evidence>
<evidence type="ECO:0000256" key="7">
    <source>
        <dbReference type="SAM" id="MobiDB-lite"/>
    </source>
</evidence>
<evidence type="ECO:0000269" key="8">
    <source>
    </source>
</evidence>
<evidence type="ECO:0000269" key="9">
    <source>
    </source>
</evidence>
<evidence type="ECO:0000269" key="10">
    <source>
    </source>
</evidence>
<evidence type="ECO:0000269" key="11">
    <source>
    </source>
</evidence>
<evidence type="ECO:0000269" key="12">
    <source>
    </source>
</evidence>
<evidence type="ECO:0000269" key="13">
    <source>
    </source>
</evidence>
<evidence type="ECO:0000269" key="14">
    <source>
    </source>
</evidence>
<evidence type="ECO:0000269" key="15">
    <source>
    </source>
</evidence>
<evidence type="ECO:0000269" key="16">
    <source>
    </source>
</evidence>
<evidence type="ECO:0000269" key="17">
    <source>
    </source>
</evidence>
<evidence type="ECO:0000269" key="18">
    <source>
    </source>
</evidence>
<evidence type="ECO:0000269" key="19">
    <source>
    </source>
</evidence>
<evidence type="ECO:0000269" key="20">
    <source>
    </source>
</evidence>
<evidence type="ECO:0000269" key="21">
    <source>
    </source>
</evidence>
<evidence type="ECO:0000269" key="22">
    <source>
    </source>
</evidence>
<evidence type="ECO:0000269" key="23">
    <source>
    </source>
</evidence>
<evidence type="ECO:0000269" key="24">
    <source>
    </source>
</evidence>
<evidence type="ECO:0000269" key="25">
    <source>
    </source>
</evidence>
<evidence type="ECO:0000269" key="26">
    <source>
    </source>
</evidence>
<evidence type="ECO:0000269" key="27">
    <source>
    </source>
</evidence>
<evidence type="ECO:0000269" key="28">
    <source>
    </source>
</evidence>
<evidence type="ECO:0000269" key="29">
    <source>
    </source>
</evidence>
<evidence type="ECO:0000269" key="30">
    <source>
    </source>
</evidence>
<evidence type="ECO:0000269" key="31">
    <source>
    </source>
</evidence>
<evidence type="ECO:0000269" key="32">
    <source>
    </source>
</evidence>
<evidence type="ECO:0000269" key="33">
    <source>
    </source>
</evidence>
<evidence type="ECO:0000269" key="34">
    <source>
    </source>
</evidence>
<evidence type="ECO:0000269" key="35">
    <source>
    </source>
</evidence>
<evidence type="ECO:0000269" key="36">
    <source>
    </source>
</evidence>
<evidence type="ECO:0000269" key="37">
    <source>
    </source>
</evidence>
<evidence type="ECO:0000269" key="38">
    <source>
    </source>
</evidence>
<evidence type="ECO:0000303" key="39">
    <source>
    </source>
</evidence>
<evidence type="ECO:0000303" key="40">
    <source>
    </source>
</evidence>
<evidence type="ECO:0000303" key="41">
    <source>
    </source>
</evidence>
<evidence type="ECO:0000303" key="42">
    <source>
    </source>
</evidence>
<evidence type="ECO:0000303" key="43">
    <source>
    </source>
</evidence>
<evidence type="ECO:0000305" key="44"/>
<evidence type="ECO:0000312" key="45">
    <source>
        <dbReference type="HGNC" id="HGNC:2928"/>
    </source>
</evidence>
<evidence type="ECO:0007744" key="46">
    <source>
    </source>
</evidence>
<evidence type="ECO:0007744" key="47">
    <source>
    </source>
</evidence>
<evidence type="ECO:0007744" key="48">
    <source>
    </source>
</evidence>
<evidence type="ECO:0007744" key="49">
    <source>
    </source>
</evidence>
<evidence type="ECO:0007829" key="50">
    <source>
        <dbReference type="PDB" id="1DXX"/>
    </source>
</evidence>
<evidence type="ECO:0007829" key="51">
    <source>
        <dbReference type="PDB" id="1EG3"/>
    </source>
</evidence>
<evidence type="ECO:0007829" key="52">
    <source>
        <dbReference type="PDB" id="1EG4"/>
    </source>
</evidence>
<evidence type="ECO:0007829" key="53">
    <source>
        <dbReference type="PDB" id="3UUN"/>
    </source>
</evidence>
<feature type="chain" id="PRO_0000076075" description="Dystrophin">
    <location>
        <begin position="1"/>
        <end position="3685"/>
    </location>
</feature>
<feature type="domain" description="Calponin-homology (CH) 1" evidence="4">
    <location>
        <begin position="15"/>
        <end position="119"/>
    </location>
</feature>
<feature type="domain" description="Calponin-homology (CH) 2" evidence="4">
    <location>
        <begin position="134"/>
        <end position="240"/>
    </location>
</feature>
<feature type="repeat" description="Spectrin 1">
    <location>
        <begin position="339"/>
        <end position="447"/>
    </location>
</feature>
<feature type="repeat" description="Spectrin 2">
    <location>
        <begin position="448"/>
        <end position="556"/>
    </location>
</feature>
<feature type="repeat" description="Spectrin 3">
    <location>
        <begin position="559"/>
        <end position="667"/>
    </location>
</feature>
<feature type="repeat" description="Spectrin 4">
    <location>
        <begin position="719"/>
        <end position="828"/>
    </location>
</feature>
<feature type="repeat" description="Spectrin 5">
    <location>
        <begin position="830"/>
        <end position="934"/>
    </location>
</feature>
<feature type="repeat" description="Spectrin 6">
    <location>
        <begin position="943"/>
        <end position="1045"/>
    </location>
</feature>
<feature type="repeat" description="Spectrin 7">
    <location>
        <begin position="1048"/>
        <end position="1154"/>
    </location>
</feature>
<feature type="repeat" description="Spectrin 8">
    <location>
        <begin position="1157"/>
        <end position="1263"/>
    </location>
</feature>
<feature type="repeat" description="Spectrin 9">
    <location>
        <begin position="1266"/>
        <end position="1367"/>
    </location>
</feature>
<feature type="repeat" description="Spectrin 10">
    <location>
        <begin position="1368"/>
        <end position="1463"/>
    </location>
</feature>
<feature type="repeat" description="Spectrin 11">
    <location>
        <begin position="1468"/>
        <end position="1568"/>
    </location>
</feature>
<feature type="repeat" description="Spectrin 12">
    <location>
        <begin position="1571"/>
        <end position="1676"/>
    </location>
</feature>
<feature type="repeat" description="Spectrin 13">
    <location>
        <begin position="1679"/>
        <end position="1778"/>
    </location>
</feature>
<feature type="repeat" description="Spectrin 14">
    <location>
        <begin position="1779"/>
        <end position="1874"/>
    </location>
</feature>
<feature type="repeat" description="Spectrin 15">
    <location>
        <begin position="1877"/>
        <end position="1979"/>
    </location>
</feature>
<feature type="repeat" description="Spectrin 16">
    <location>
        <begin position="1992"/>
        <end position="2101"/>
    </location>
</feature>
<feature type="repeat" description="Spectrin 17">
    <location>
        <begin position="2104"/>
        <end position="2208"/>
    </location>
</feature>
<feature type="repeat" description="Spectrin 18">
    <location>
        <begin position="2211"/>
        <end position="2318"/>
    </location>
</feature>
<feature type="repeat" description="Spectrin 19">
    <location>
        <begin position="2319"/>
        <end position="2423"/>
    </location>
</feature>
<feature type="repeat" description="Spectrin 20">
    <location>
        <begin position="2475"/>
        <end position="2577"/>
    </location>
</feature>
<feature type="repeat" description="Spectrin 21">
    <location>
        <begin position="2580"/>
        <end position="2686"/>
    </location>
</feature>
<feature type="repeat" description="Spectrin 22">
    <location>
        <begin position="2689"/>
        <end position="2802"/>
    </location>
</feature>
<feature type="repeat" description="Spectrin 23">
    <location>
        <begin position="2808"/>
        <end position="2930"/>
    </location>
</feature>
<feature type="repeat" description="Spectrin 24">
    <location>
        <begin position="2935"/>
        <end position="3040"/>
    </location>
</feature>
<feature type="domain" description="WW" evidence="5">
    <location>
        <begin position="3055"/>
        <end position="3088"/>
    </location>
</feature>
<feature type="zinc finger region" description="ZZ-type; degenerate" evidence="6">
    <location>
        <begin position="3308"/>
        <end position="3364"/>
    </location>
</feature>
<feature type="region of interest" description="Actin-binding">
    <location>
        <begin position="1"/>
        <end position="240"/>
    </location>
</feature>
<feature type="region of interest" description="ANK2- and ANK-3 binding" evidence="1">
    <location>
        <begin position="63"/>
        <end position="72"/>
    </location>
</feature>
<feature type="region of interest" description="Interaction with SYNM" evidence="1">
    <location>
        <begin position="1415"/>
        <end position="1913"/>
    </location>
</feature>
<feature type="region of interest" description="Interaction with SYNM" evidence="1">
    <location>
        <begin position="3058"/>
        <end position="3408"/>
    </location>
</feature>
<feature type="region of interest" description="Binds to SNTB1">
    <location>
        <begin position="3466"/>
        <end position="3518"/>
    </location>
</feature>
<feature type="region of interest" description="Disordered" evidence="7">
    <location>
        <begin position="3528"/>
        <end position="3554"/>
    </location>
</feature>
<feature type="region of interest" description="Disordered" evidence="7">
    <location>
        <begin position="3603"/>
        <end position="3685"/>
    </location>
</feature>
<feature type="compositionally biased region" description="Polar residues" evidence="7">
    <location>
        <begin position="3607"/>
        <end position="3626"/>
    </location>
</feature>
<feature type="compositionally biased region" description="Polar residues" evidence="7">
    <location>
        <begin position="3662"/>
        <end position="3673"/>
    </location>
</feature>
<feature type="binding site" evidence="6">
    <location>
        <position position="3313"/>
    </location>
    <ligand>
        <name>Zn(2+)</name>
        <dbReference type="ChEBI" id="CHEBI:29105"/>
    </ligand>
</feature>
<feature type="binding site" evidence="6">
    <location>
        <position position="3316"/>
    </location>
    <ligand>
        <name>Zn(2+)</name>
        <dbReference type="ChEBI" id="CHEBI:29105"/>
    </ligand>
</feature>
<feature type="binding site" evidence="6">
    <location>
        <position position="3337"/>
    </location>
    <ligand>
        <name>Zn(2+)</name>
        <dbReference type="ChEBI" id="CHEBI:29105"/>
    </ligand>
</feature>
<feature type="binding site" evidence="6">
    <location>
        <position position="3340"/>
    </location>
    <ligand>
        <name>Zn(2+)</name>
        <dbReference type="ChEBI" id="CHEBI:29105"/>
    </ligand>
</feature>
<feature type="modified residue" description="Phosphoserine" evidence="46">
    <location>
        <position position="3483"/>
    </location>
</feature>
<feature type="modified residue" description="Phosphoserine" evidence="49">
    <location>
        <position position="3490"/>
    </location>
</feature>
<feature type="modified residue" description="Phosphoserine" evidence="49">
    <location>
        <position position="3500"/>
    </location>
</feature>
<feature type="modified residue" description="Phosphoserine" evidence="47 48">
    <location>
        <position position="3612"/>
    </location>
</feature>
<feature type="modified residue" description="Phosphoserine" evidence="46 47">
    <location>
        <position position="3613"/>
    </location>
</feature>
<feature type="modified residue" description="Phosphoserine" evidence="46">
    <location>
        <position position="3617"/>
    </location>
</feature>
<feature type="modified residue" description="Phosphoserine" evidence="46 47 48 49">
    <location>
        <position position="3623"/>
    </location>
</feature>
<feature type="modified residue" description="Phosphoserine" evidence="48 49">
    <location>
        <position position="3624"/>
    </location>
</feature>
<feature type="modified residue" description="Phosphoserine" evidence="46 49">
    <location>
        <position position="3666"/>
    </location>
</feature>
<feature type="splice variant" id="VSP_017490" description="In isoform 12, isoform 13, isoform 14, isoform 15, isoform 16 and isoform 17." evidence="39 40 43">
    <location>
        <begin position="1"/>
        <end position="3068"/>
    </location>
</feature>
<feature type="splice variant" id="VSP_060276" description="In isoform 11.">
    <location>
        <begin position="1"/>
        <end position="2729"/>
    </location>
</feature>
<feature type="splice variant" id="VSP_060275" description="In isoform 6, isoform 7, isoform 8, isoform 9 and isoform 10.">
    <location>
        <begin position="1"/>
        <end position="2460"/>
    </location>
</feature>
<feature type="splice variant" id="VSP_006809" description="In isoform 2." evidence="41">
    <original>MLWWEEVEDCY</original>
    <variation>MED</variation>
    <location>
        <begin position="1"/>
        <end position="11"/>
    </location>
</feature>
<feature type="splice variant" id="VSP_060274" description="In isoform 3.">
    <original>MLWWEEVEDCY</original>
    <variation>MSEVSSD</variation>
    <location>
        <begin position="1"/>
        <end position="11"/>
    </location>
</feature>
<feature type="splice variant" id="VSP_006806" description="In isoform 4.">
    <original>M</original>
    <variation>MTEIILLIFFPAYFLN</variation>
    <location>
        <position position="1"/>
    </location>
</feature>
<feature type="splice variant" id="VSP_006808" description="In isoform 5." evidence="44">
    <original>M</original>
    <variation>MSARKLRNLSYKK</variation>
    <location>
        <position position="1"/>
    </location>
</feature>
<feature type="splice variant" id="VSP_006807" description="In isoform 4 and isoform 5.">
    <location>
        <begin position="2"/>
        <end position="1357"/>
    </location>
</feature>
<feature type="splice variant" id="VSP_060277" description="In isoform 11.">
    <original>GVKELMKQWQ</original>
    <variation>MLHRKTYHVK</variation>
    <location>
        <begin position="2730"/>
        <end position="2739"/>
    </location>
</feature>
<feature type="splice variant" id="VSP_017491" description="In isoform 12, isoform 13, isoform 14, isoform 15, isoform 16 and isoform 17." evidence="39 40 43">
    <original>KVPYYIN</original>
    <variation>MREQLKG</variation>
    <location>
        <begin position="3069"/>
        <end position="3075"/>
    </location>
</feature>
<feature type="splice variant" id="VSP_060278" description="In isoform 17.">
    <location>
        <begin position="3409"/>
        <end position="3685"/>
    </location>
</feature>
<feature type="splice variant" id="VSP_046319" description="In isoform 7, isoform 10 and isoform 16.">
    <location>
        <begin position="3409"/>
        <end position="3518"/>
    </location>
</feature>
<feature type="splice variant" id="VSP_017492" description="In isoform 9, isoform 13 and isoform 15." evidence="39 40 43">
    <location>
        <begin position="3409"/>
        <end position="3421"/>
    </location>
</feature>
<feature type="splice variant" id="VSP_017493" description="In isoform 8, isoform 9, isoform 10, isoform 14, isoform 15 and isoform 16." evidence="39 40 43">
    <original>RNTPGKPMREDTM</original>
    <variation>HNVGSLFHMADDLGRAMESLVSVMTDEEGAE</variation>
    <location>
        <begin position="3673"/>
        <end position="3685"/>
    </location>
</feature>
<feature type="sequence variant" id="VAR_023537" description="In CMD3B; decreased thermodynamic stability; accelerated unfolding, perturbed protein structure; no effect on anchoring function; dbSNP:rs2093886366." evidence="12 21">
    <original>K</original>
    <variation>N</variation>
    <location>
        <position position="18"/>
    </location>
</feature>
<feature type="sequence variant" id="VAR_005146" description="In BMD." evidence="28">
    <location>
        <begin position="32"/>
        <end position="62"/>
    </location>
</feature>
<feature type="sequence variant" id="VAR_005147" description="In DMD; dbSNP:rs128626231." evidence="32">
    <original>L</original>
    <variation>R</variation>
    <location>
        <position position="54"/>
    </location>
</feature>
<feature type="sequence variant" id="VAR_065764" description="In a patient with Becker muscular dystrophy; dbSNP:rs886044589." evidence="19">
    <original>W</original>
    <variation>R</variation>
    <location>
        <position position="118"/>
    </location>
</feature>
<feature type="sequence variant" id="VAR_005148" description="In dbSNP:rs1800256." evidence="22">
    <original>Q</original>
    <variation>P</variation>
    <location>
        <position position="133"/>
    </location>
</feature>
<feature type="sequence variant" id="VAR_023538" description="In one patient with Becker muscular dystrophy; dbSNP:rs1557052542." evidence="13">
    <original>D</original>
    <variation>V</variation>
    <location>
        <position position="165"/>
    </location>
</feature>
<feature type="sequence variant" id="VAR_005149" description="In BMD; dbSNP:rs128626236." evidence="28">
    <original>A</original>
    <variation>D</variation>
    <location>
        <position position="168"/>
    </location>
</feature>
<feature type="sequence variant" id="VAR_023539" description="In BMD; dbSNP:rs755452188." evidence="8">
    <original>A</original>
    <variation>P</variation>
    <location>
        <position position="171"/>
    </location>
</feature>
<feature type="sequence variant" id="VAR_005150" description="In BMD; dbSNP:rs128626237." evidence="28">
    <original>Y</original>
    <variation>N</variation>
    <location>
        <position position="231"/>
    </location>
</feature>
<feature type="sequence variant" id="VAR_023540" description="In CMD3B; dbSNP:rs128627255." evidence="36">
    <original>T</original>
    <variation>A</variation>
    <location>
        <position position="279"/>
    </location>
</feature>
<feature type="sequence variant" id="VAR_036353" description="In a colorectal cancer sample; somatic mutation." evidence="18">
    <original>L</original>
    <variation>F</variation>
    <location>
        <position position="334"/>
    </location>
</feature>
<feature type="sequence variant" id="VAR_005151" description="In dbSNP:rs1800266." evidence="27">
    <original>Q</original>
    <variation>H</variation>
    <location>
        <position position="365"/>
    </location>
</feature>
<feature type="sequence variant" id="VAR_057642" description="In dbSNP:rs34155804.">
    <original>T</original>
    <variation>S</variation>
    <location>
        <position position="409"/>
    </location>
</feature>
<feature type="sequence variant" id="VAR_005152" description="In BMD.">
    <location>
        <begin position="495"/>
        <end position="534"/>
    </location>
</feature>
<feature type="sequence variant" id="VAR_057643" description="In dbSNP:rs5972599.">
    <original>A</original>
    <variation>V</variation>
    <location>
        <position position="573"/>
    </location>
</feature>
<feature type="sequence variant" id="VAR_005153" description="In dbSNP:rs1800259." evidence="22">
    <original>L</original>
    <variation>I</variation>
    <location>
        <position position="623"/>
    </location>
</feature>
<feature type="sequence variant" id="VAR_023541" description="In DMD; dbSNP:rs147822019." evidence="30">
    <original>D</original>
    <variation>G</variation>
    <location>
        <position position="645"/>
    </location>
</feature>
<feature type="sequence variant" id="VAR_062110" description="In dbSNP:rs34563188.">
    <original>S</original>
    <variation>L</variation>
    <location>
        <position position="666"/>
    </location>
</feature>
<feature type="sequence variant" id="VAR_057644" description="In dbSNP:rs16998350.">
    <original>T</original>
    <variation>S</variation>
    <location>
        <position position="715"/>
    </location>
</feature>
<feature type="sequence variant" id="VAR_005154" description="In DMD; dbSNP:rs128626244." evidence="29">
    <original>K</original>
    <variation>E</variation>
    <location>
        <position position="773"/>
    </location>
</feature>
<feature type="sequence variant" id="VAR_005155" description="In dbSNP:rs1800260." evidence="22">
    <original>A</original>
    <variation>G</variation>
    <location>
        <position position="784"/>
    </location>
</feature>
<feature type="sequence variant" id="VAR_005156" description="In dbSNP:rs228406." evidence="22 23 24">
    <original>D</original>
    <variation>G</variation>
    <location>
        <position position="882"/>
    </location>
</feature>
<feature type="sequence variant" id="VAR_057645" description="In dbSNP:rs3827462.">
    <original>T</original>
    <variation>S</variation>
    <location>
        <position position="1136"/>
    </location>
</feature>
<feature type="sequence variant" id="VAR_005157" description="In dbSNP:rs1800262." evidence="22">
    <original>V</original>
    <variation>F</variation>
    <location>
        <position position="1197"/>
    </location>
</feature>
<feature type="sequence variant" id="VAR_036354" description="In a breast cancer sample; somatic mutation." evidence="18">
    <original>E</original>
    <variation>Q</variation>
    <location>
        <position position="1219"/>
    </location>
</feature>
<feature type="sequence variant" id="VAR_005158" description="In dbSNP:rs1800269.">
    <original>T</original>
    <variation>I</variation>
    <location>
        <position position="1245"/>
    </location>
</feature>
<feature type="sequence variant" id="VAR_005159" description="In dbSNP:rs1800270.">
    <original>A</original>
    <variation>P</variation>
    <location>
        <position position="1278"/>
    </location>
</feature>
<feature type="sequence variant" id="VAR_005160" description="In dbSNP:rs1800263." evidence="22">
    <original>K</original>
    <variation>N</variation>
    <location>
        <position position="1377"/>
    </location>
</feature>
<feature type="sequence variant" id="VAR_057646" description="In dbSNP:rs28715870.">
    <original>F</original>
    <variation>V</variation>
    <location>
        <position position="1388"/>
    </location>
</feature>
<feature type="sequence variant" id="VAR_005161" description="In dbSNP:rs1057872." evidence="23">
    <original>Q</original>
    <variation>L</variation>
    <location>
        <position position="1469"/>
    </location>
</feature>
<feature type="sequence variant" id="VAR_036355" description="In a breast cancer sample; somatic mutation; dbSNP:rs752129019." evidence="18">
    <original>R</original>
    <variation>H</variation>
    <location>
        <position position="1470"/>
    </location>
</feature>
<feature type="sequence variant" id="VAR_023542" description="In dbSNP:rs16990264." evidence="11">
    <original>N</original>
    <variation>K</variation>
    <location>
        <position position="1672"/>
    </location>
</feature>
<feature type="sequence variant" id="VAR_005162" description="In dbSNP:rs1801187." evidence="22">
    <original>R</original>
    <variation>H</variation>
    <location>
        <position position="1745"/>
    </location>
</feature>
<feature type="sequence variant" id="VAR_005163" description="In dbSNP:rs1801186." evidence="22">
    <original>R</original>
    <variation>S</variation>
    <location>
        <position position="1844"/>
    </location>
</feature>
<feature type="sequence variant" id="VAR_057647" description="In dbSNP:rs16990169.">
    <original>R</original>
    <variation>C</variation>
    <location>
        <position position="2108"/>
    </location>
</feature>
<feature type="sequence variant" id="VAR_005164" description="In dbSNP:rs1800273." evidence="12">
    <original>R</original>
    <variation>W</variation>
    <location>
        <position position="2155"/>
    </location>
</feature>
<feature type="sequence variant" id="VAR_036356" description="In a colorectal cancer sample; somatic mutation." evidence="18">
    <original>A</original>
    <variation>V</variation>
    <location>
        <position position="2164"/>
    </location>
</feature>
<feature type="sequence variant" id="VAR_005165" description="In dbSNP:rs149322279." evidence="27">
    <original>R</original>
    <variation>W</variation>
    <location>
        <position position="2191"/>
    </location>
</feature>
<feature type="sequence variant" id="VAR_023543" description="In dbSNP:rs747055774." evidence="12">
    <original>N</original>
    <variation>T</variation>
    <location>
        <position position="2299"/>
    </location>
</feature>
<feature type="sequence variant" id="VAR_005166" description="In DMD.">
    <location>
        <begin position="2305"/>
        <end position="2366"/>
    </location>
</feature>
<feature type="sequence variant" id="VAR_005167" description="In dbSNP:rs1800275." evidence="12 23">
    <original>K</original>
    <variation>Q</variation>
    <location>
        <position position="2366"/>
    </location>
</feature>
<feature type="sequence variant" id="VAR_005168" description="In dbSNP:rs41305353." evidence="12">
    <original>E</original>
    <variation>V</variation>
    <location>
        <position position="2910"/>
    </location>
</feature>
<feature type="sequence variant" id="VAR_005169" description="In dbSNP:rs1800278." evidence="12">
    <original>N</original>
    <variation>D</variation>
    <location>
        <position position="2912"/>
    </location>
</feature>
<feature type="sequence variant" id="VAR_005170" description="In BMD; dbSNP:rs1800279.">
    <original>H</original>
    <variation>R</variation>
    <location>
        <position position="2921"/>
    </location>
</feature>
<feature type="sequence variant" id="VAR_005171" description="In dbSNP:rs1800280." evidence="15 22 23">
    <original>R</original>
    <variation>Q</variation>
    <location>
        <position position="2937"/>
    </location>
</feature>
<feature type="sequence variant" id="VAR_023544" description="In CMD3B; dbSNP:rs141392048." evidence="12">
    <original>F</original>
    <variation>L</variation>
    <location>
        <position position="3228"/>
    </location>
</feature>
<feature type="sequence variant" id="VAR_023545" description="In DMD; results in highly reduced protein levels and expression at the sarcolemma; dbSNP:rs886043597." evidence="13 20">
    <original>C</original>
    <variation>F</variation>
    <location>
        <position position="3313"/>
    </location>
</feature>
<feature type="sequence variant" id="VAR_023546" description="In DMD; does not affect protein stability; does not affect protein expression at the sarcolemma; interaction with DAG1 is reduced." evidence="20 38">
    <original>D</original>
    <variation>H</variation>
    <location>
        <position position="3335"/>
    </location>
</feature>
<feature type="sequence variant" id="VAR_023547" description="In DMD; results in highly reduced protein levels and expression at the sarcolemma; dbSNP:rs104894788." evidence="20 35">
    <original>C</original>
    <variation>Y</variation>
    <location>
        <position position="3340"/>
    </location>
</feature>
<feature type="sequence variant" id="VAR_005172" description="In BMD; dbSNP:rs104894791." evidence="31">
    <original>A</original>
    <variation>V</variation>
    <location>
        <position position="3421"/>
    </location>
</feature>
<feature type="sequence conflict" description="In Ref. 10; CAA29544." evidence="44" ref="10">
    <original>Q</original>
    <variation>QM</variation>
    <location>
        <position position="664"/>
    </location>
</feature>
<feature type="sequence conflict" description="In Ref. 13; CAA38589." evidence="44" ref="13">
    <original>G</original>
    <variation>E</variation>
    <location>
        <position position="2361"/>
    </location>
</feature>
<feature type="sequence conflict" description="In Ref. 6; AAH70078." evidence="44" ref="6">
    <original>P</original>
    <variation>T</variation>
    <location>
        <position position="3542"/>
    </location>
</feature>
<feature type="sequence conflict" description="In Ref. 6; AAH70078." evidence="44" ref="6">
    <original>M</original>
    <variation>V</variation>
    <location>
        <position position="3546"/>
    </location>
</feature>
<feature type="helix" evidence="50">
    <location>
        <begin position="14"/>
        <end position="31"/>
    </location>
</feature>
<feature type="turn" evidence="50">
    <location>
        <begin position="40"/>
        <end position="46"/>
    </location>
</feature>
<feature type="helix" evidence="50">
    <location>
        <begin position="48"/>
        <end position="58"/>
    </location>
</feature>
<feature type="helix" evidence="50">
    <location>
        <begin position="70"/>
        <end position="86"/>
    </location>
</feature>
<feature type="helix" evidence="50">
    <location>
        <begin position="96"/>
        <end position="100"/>
    </location>
</feature>
<feature type="helix" evidence="50">
    <location>
        <begin position="104"/>
        <end position="118"/>
    </location>
</feature>
<feature type="turn" evidence="50">
    <location>
        <begin position="119"/>
        <end position="121"/>
    </location>
</feature>
<feature type="helix" evidence="50">
    <location>
        <begin position="122"/>
        <end position="131"/>
    </location>
</feature>
<feature type="helix" evidence="50">
    <location>
        <begin position="136"/>
        <end position="148"/>
    </location>
</feature>
<feature type="strand" evidence="50">
    <location>
        <begin position="158"/>
        <end position="160"/>
    </location>
</feature>
<feature type="helix" evidence="50">
    <location>
        <begin position="161"/>
        <end position="163"/>
    </location>
</feature>
<feature type="helix" evidence="50">
    <location>
        <begin position="167"/>
        <end position="176"/>
    </location>
</feature>
<feature type="helix" evidence="50">
    <location>
        <begin position="178"/>
        <end position="180"/>
    </location>
</feature>
<feature type="helix" evidence="50">
    <location>
        <begin position="183"/>
        <end position="187"/>
    </location>
</feature>
<feature type="helix" evidence="50">
    <location>
        <begin position="192"/>
        <end position="205"/>
    </location>
</feature>
<feature type="helix" evidence="50">
    <location>
        <begin position="215"/>
        <end position="218"/>
    </location>
</feature>
<feature type="strand" evidence="50">
    <location>
        <begin position="219"/>
        <end position="222"/>
    </location>
</feature>
<feature type="helix" evidence="50">
    <location>
        <begin position="225"/>
        <end position="236"/>
    </location>
</feature>
<feature type="strand" evidence="50">
    <location>
        <begin position="243"/>
        <end position="245"/>
    </location>
</feature>
<feature type="helix" evidence="53">
    <location>
        <begin position="339"/>
        <end position="365"/>
    </location>
</feature>
<feature type="helix" evidence="53">
    <location>
        <begin position="372"/>
        <end position="409"/>
    </location>
</feature>
<feature type="helix" evidence="53">
    <location>
        <begin position="414"/>
        <end position="452"/>
    </location>
</feature>
<feature type="helix" evidence="51">
    <location>
        <begin position="3050"/>
        <end position="3054"/>
    </location>
</feature>
<feature type="strand" evidence="51">
    <location>
        <begin position="3061"/>
        <end position="3065"/>
    </location>
</feature>
<feature type="strand" evidence="51">
    <location>
        <begin position="3071"/>
        <end position="3075"/>
    </location>
</feature>
<feature type="turn" evidence="51">
    <location>
        <begin position="3076"/>
        <end position="3079"/>
    </location>
</feature>
<feature type="strand" evidence="51">
    <location>
        <begin position="3080"/>
        <end position="3084"/>
    </location>
</feature>
<feature type="helix" evidence="51">
    <location>
        <begin position="3086"/>
        <end position="3094"/>
    </location>
</feature>
<feature type="helix" evidence="51">
    <location>
        <begin position="3095"/>
        <end position="3098"/>
    </location>
</feature>
<feature type="helix" evidence="51">
    <location>
        <begin position="3104"/>
        <end position="3118"/>
    </location>
</feature>
<feature type="helix" evidence="51">
    <location>
        <begin position="3121"/>
        <end position="3123"/>
    </location>
</feature>
<feature type="helix" evidence="51">
    <location>
        <begin position="3126"/>
        <end position="3135"/>
    </location>
</feature>
<feature type="strand" evidence="51">
    <location>
        <begin position="3143"/>
        <end position="3146"/>
    </location>
</feature>
<feature type="helix" evidence="51">
    <location>
        <begin position="3147"/>
        <end position="3164"/>
    </location>
</feature>
<feature type="strand" evidence="52">
    <location>
        <begin position="3165"/>
        <end position="3168"/>
    </location>
</feature>
<feature type="helix" evidence="51">
    <location>
        <begin position="3171"/>
        <end position="3186"/>
    </location>
</feature>
<feature type="strand" evidence="51">
    <location>
        <begin position="3192"/>
        <end position="3195"/>
    </location>
</feature>
<feature type="helix" evidence="51">
    <location>
        <begin position="3196"/>
        <end position="3205"/>
    </location>
</feature>
<feature type="strand" evidence="51">
    <location>
        <begin position="3207"/>
        <end position="3209"/>
    </location>
</feature>
<feature type="helix" evidence="51">
    <location>
        <begin position="3211"/>
        <end position="3222"/>
    </location>
</feature>
<feature type="helix" evidence="51">
    <location>
        <begin position="3231"/>
        <end position="3247"/>
    </location>
</feature>
<feature type="helix" evidence="51">
    <location>
        <begin position="3251"/>
        <end position="3254"/>
    </location>
</feature>
<feature type="helix" evidence="51">
    <location>
        <begin position="3260"/>
        <end position="3269"/>
    </location>
</feature>
<feature type="turn" evidence="51">
    <location>
        <begin position="3270"/>
        <end position="3272"/>
    </location>
</feature>
<feature type="helix" evidence="51">
    <location>
        <begin position="3278"/>
        <end position="3286"/>
    </location>
</feature>
<feature type="turn" evidence="51">
    <location>
        <begin position="3290"/>
        <end position="3293"/>
    </location>
</feature>
<feature type="helix" evidence="51">
    <location>
        <begin position="3294"/>
        <end position="3304"/>
    </location>
</feature>
<feature type="modified residue" description="Phosphothreonine" evidence="46">
    <location sequence="P11532-5">
        <position position="340"/>
    </location>
</feature>
<feature type="modified residue" description="Phosphoserine" evidence="46">
    <location sequence="P11532-5">
        <position position="344"/>
    </location>
</feature>
<feature type="modified residue" description="Phosphoserine" evidence="46">
    <location sequence="P11532-5">
        <position position="348"/>
    </location>
</feature>
<feature type="modified residue" description="Phosphothreonine" evidence="49">
    <location sequence="P11532-5">
        <position position="616"/>
    </location>
</feature>
<feature type="modified residue" description="Phosphothreonine" evidence="49">
    <location sequence="P11532-6">
        <position position="629"/>
    </location>
</feature>
<feature type="modified residue" description="Phosphothreonine" evidence="46">
    <location sequence="P11532-8">
        <position position="340"/>
    </location>
</feature>
<feature type="modified residue" description="Phosphoserine" evidence="46">
    <location sequence="P11532-8">
        <position position="344"/>
    </location>
</feature>
<feature type="modified residue" description="Phosphoserine" evidence="46">
    <location sequence="P11532-8">
        <position position="348"/>
    </location>
</feature>
<feature type="modified residue" description="Phosphothreonine" evidence="49">
    <location sequence="P11532-9">
        <position position="519"/>
    </location>
</feature>
<protein>
    <recommendedName>
        <fullName evidence="42">Dystrophin</fullName>
    </recommendedName>
</protein>
<gene>
    <name evidence="45" type="primary">DMD</name>
</gene>
<sequence length="3685" mass="426778">MLWWEEVEDCYEREDVQKKTFTKWVNAQFSKFGKQHIENLFSDLQDGRRLLDLLEGLTGQKLPKEKGSTRVHALNNVNKALRVLQNNNVDLVNIGSTDIVDGNHKLTLGLIWNIILHWQVKNVMKNIMAGLQQTNSEKILLSWVRQSTRNYPQVNVINFTTSWSDGLALNALIHSHRPDLFDWNSVVCQQSATQRLEHAFNIARYQLGIEKLLDPEDVDTTYPDKKSILMYITSLFQVLPQQVSIEAIQEVEMLPRPPKVTKEEHFQLHHQMHYSQQITVSLAQGYERTSSPKPRFKSYAYTQAAYVTTSDPTRSPFPSQHLEAPEDKSFGSSLMESEVNLDRYQTALEEVLSWLLSAEDTLQAQGEISNDVEVVKDQFHTHEGYMMDLTAHQGRVGNILQLGSKLIGTGKLSEDEETEVQEQMNLLNSRWECLRVASMEKQSNLHRVLMDLQNQKLKELNDWLTKTEERTRKMEEEPLGPDLEDLKRQVQQHKVLQEDLEQEQVRVNSLTHMVVVVDESSGDHATAALEEQLKVLGDRWANICRWTEDRWVLLQDILLKWQRLTEEQCLFSAWLSEKEDAVNKIHTTGFKDQNEMLSSLQKLAVLKADLEKKKQSMGKLYSLKQDLLSTLKNKSVTQKTEAWLDNFARCWDNLVQKLEKSTAQISQAVTTTQPSLTQTTVMETVTTVTTREQILVKHAQEELPPPPPQKKRQITVDSEIRKRLDVDITELHSWITRSEAVLQSPEFAIFRKEGNFSDLKEKVNAIEREKAEKFRKLQDASRSAQALVEQMVNEGVNADSIKQASEQLNSRWIEFCQLLSERLNWLEYQNNIIAFYNQLQQLEQMTTTAENWLKIQPTTPSEPTAIKSQLKICKDEVNRLSDLQPQIERLKIQSIALKEKGQGPMFLDADFVAFTNHFKQVFSDVQAREKELQTIFDTLPPMRYQETMSAIRTWVQQSETKLSIPQLSVTDYEIMEQRLGELQALQSSLQEQQSGLYYLSTTVKEMSKKAPSEISRKYQSEFEEIEGRWKKLSSQLVEHCQKLEEQMNKLRKIQNHIQTLKKWMAEVDVFLKEEWPALGDSEILKKQLKQCRLLVSDIQTIQPSLNSVNEGGQKIKNEAEPEFASRLETELKELNTQWDHMCQQVYARKEALKGGLEKTVSLQKDLSEMHEWMTQAEEEYLERDFEYKTPDELQKAVEEMKRAKEEAQQKEAKVKLLTESVNSVIAQAPPVAQEALKKELETLTTNYQWLCTRLNGKCKTLEEVWACWHELLSYLEKANKWLNEVEFKLKTTENIPGGAEEISEVLDSLENLMRHSEDNPNQIRILAQTLTDGGVMDELINEELETFNSRWRELHEEAVRRQKLLEQSIQSAQETEKSLHLIQESLTFIDKQLAAYIADKVDAAQMPQEAQKIQSDLTSHEISLEEMKKHNQGKEAAQRVLSQIDVAQKKLQDVSMKFRLFQKPANFEQRLQESKMILDEVKMHLPALETKSVEQEVVQSQLNHCVNLYKSLSEVKSEVEMVIKTGRQIVQKKQTENPKELDERVTALKLHYNELGAKVTERKQQLEKCLKLSRKMRKEMNVLTEWLAATDMELTKRSAVEGMPSNLDSEVAWGKATQKEIEKQKVHLKSITEVGEALKTVLGKKETLVEDKLSLLNSNWIAVTSRAEEWLNLLLEYQKHMETFDQNVDHITKWIIQADTLLDESEKKKPQQKEDVLKRLKAELNDIRPKVDSTRDQAANLMANRGDHCRKLVEPQISELNHRFAAISHRIKTGKASIPLKELEQFNSDIQKLLEPLEAEIQQGVNLKEEDFNKDMNEDNEGTVKELLQRGDNLQQRITDERKREEIKIKQQLLQTKHNALKDLRSQRRKKALEISHQWYQYKRQADDLLKCLDDIEKKLASLPEPRDERKIKEIDRELQKKKEELNAVRRQAEGLSEDGAAMAVEPTQIQLSKRWREIESKFAQFRRLNFAQIHTVREETMMVMTEDMPLEISYVPSTYLTEITHVSQALLEVEQLLNAPDLCAKDFEDLFKQEESLKNIKDSLQQSSGRIDIIHSKKTAALQSATPVERVKLQEALSQLDFQWEKVNKMYKDRQGRFDRSVEKWRRFHYDIKIFNQWLTEAEQFLRKTQIPENWEHAKYKWYLKELQDGIGQRQTVVRTLNATGEEIIQQSSKTDASILQEKLGSLNLRWQEVCKQLSDRKKRLEEQKNILSEFQRDLNEFVLWLEEADNIASIPLEPGKEQQLKEKLEQVKLLVEELPLRQGILKQLNETGGPVLVSAPISPEEQDKLENKLKQTNLQWIKVSRALPEKQGEIEAQIKDLGQLEKKLEDLEEQLNHLLLWLSPIRNQLEIYNQPNQEGPFDVKETEIAVQAKQPDVEEILSKGQHLYKEKPATQPVKRKLEDLSSEWKAVNRLLQELRAKQPDLAPGLTTIGASPTQTVTLVTQPVVTKETAISKLEMPSSLMLEVPALADFNRAWTELTDWLSLLDQVIKSQRVMVGDLEDINEMIIKQKATMQDLEQRRPQLEELITAAQNLKNKTSNQEARTIITDRIERIQNQWDEVQEHLQNRRQQLNEMLKDSTQWLEAKEEAEQVLGQARAKLESWKEGPYTVDAIQKKITETKQLAKDLRQWQTNVDVANDLALKLLRDYSADDTRKVHMITENINASWRSIHKRVSEREAALEETHRLLQQFPLDLEKFLAWLTEAETTANVLQDATRKERLLEDSKGVKELMKQWQDLQGEIEAHTDVYHNLDENSQKILRSLEGSDDAVLLQRRLDNMNFKWSELRKKSLNIRSHLEASSDQWKRLHLSLQELLVWLQLKDDELSRQAPIGGDFPAVQKQNDVHRAFKRELKTKEPVIMSTLETVRIFLTEQPLEGLEKLYQEPRELPPEERAQNVTRLLRKQAEEVNTEWEKLNLHSADWQRKIDETLERLRELQEATDELDLKLRQAEVIKGSWQPVGDLLIDSLQDHLEKVKALRGEIAPLKENVSHVNDLARQLTTLGIQLSPYNLSTLEDLNTRWKLLQVAVEDRVRQLHEAHRDFGPASQHFLSTSVQGPWERAISPNKVPYYINHETQTTCWDHPKMTELYQSLADLNNVRFSAYRTAMKLRRLQKALCLDLLSLSAACDALDQHNLKQNDQPMDILQIINCLTTIYDRLEQEHNNLVNVPLCVDMCLNWLLNVYDTGRTGRIRVLSFKTGIISLCKAHLEDKYRYLFKQVASSTGFCDQRRLGLLLHDSIQIPRQLGEVASFGGSNIEPSVRSCFQFANNKPEIEAALFLDWMRLEPQSMVWLPVLHRVAAAETAKHQAKCNICKECPIIGFRYRSLKHFNYDICQSCFFSGRVAKGHKMHYPMVEYCTPTTSGEDVRDFAKVLKNKFRTKRYFAKHPRMGYLPVQTVLEGDNMETPVTLINFWPVDSAPASSPQLSHDDTHSRIEHYASRLAEMENSNGSYLNDSISPNESIDDEHLLIQHYCQSLNQDSPLSQPRSPAQILISLESEERGELERILADLEEENRNLQAEYDRLKQQHEHKGLSPLPSPPEMMPTSPQSPRDAELIAEAKLLRQHKGRLEARMQILEDHNKQLESQLHRLRQLLEQPQAEAKVNGTTVSSPSTSLQRSDSSQPMLLRVVGSQTSDSMGEEDLLSPPQDTSTGLEEVMEQLNNSFPSSRGRNTPGKPMREDTM</sequence>
<reference key="1">
    <citation type="journal article" date="1988" name="Cell">
        <title>The complete sequence of dystrophin predicts a rod-shaped cytoskeletal protein.</title>
        <authorList>
            <person name="Koenig M."/>
            <person name="Monaco A.P."/>
            <person name="Kunkel L.M."/>
        </authorList>
    </citation>
    <scope>NUCLEOTIDE SEQUENCE [MRNA] (ISOFORM 1)</scope>
    <scope>VARIANTS GLY-882; LEU-1469; GLN-2366 AND GLN-2937</scope>
    <source>
        <tissue>Muscle</tissue>
    </source>
</reference>
<reference key="2">
    <citation type="journal article" date="1989" name="Nucleic Acids Res.">
        <title>Two human cDNA molecules coding for the Duchenne muscular dystrophy (DMD) locus are highly homologous.</title>
        <authorList>
            <person name="Rosenthal A."/>
            <person name="Speer A."/>
            <person name="Billowitz H."/>
            <person name="Cross G.S."/>
            <person name="Forrest S.N."/>
            <person name="Davies K.E."/>
        </authorList>
    </citation>
    <scope>NUCLEOTIDE SEQUENCE [MRNA] (ISOFORM 1)</scope>
    <scope>VARIANTS PRO-133; ILE-623; GLY-784; GLY-882; PHE-1197; ASN-1377; HIS-1745; SER-1844 AND GLN-2937</scope>
</reference>
<reference key="3">
    <citation type="journal article" date="1992" name="Proc. Natl. Acad. Sci. U.S.A.">
        <title>A 71-kilodalton protein is a major product of the Duchenne muscular dystrophy gene in brain and other nonmuscle tissues.</title>
        <authorList>
            <person name="Lederfein D."/>
            <person name="Levy Z."/>
            <person name="Augier N."/>
            <person name="Mornet D."/>
            <person name="Morris G."/>
            <person name="Fuchs O."/>
            <person name="Yaffe D."/>
            <person name="Nudel U."/>
        </authorList>
    </citation>
    <scope>NUCLEOTIDE SEQUENCE [MRNA] (ISOFORM 15)</scope>
    <scope>TISSUE SPECIFICITY</scope>
    <source>
        <tissue>Brain</tissue>
    </source>
</reference>
<reference key="4">
    <citation type="journal article" date="2005" name="Nature">
        <title>The DNA sequence of the human X chromosome.</title>
        <authorList>
            <person name="Ross M.T."/>
            <person name="Grafham D.V."/>
            <person name="Coffey A.J."/>
            <person name="Scherer S."/>
            <person name="McLay K."/>
            <person name="Muzny D."/>
            <person name="Platzer M."/>
            <person name="Howell G.R."/>
            <person name="Burrows C."/>
            <person name="Bird C.P."/>
            <person name="Frankish A."/>
            <person name="Lovell F.L."/>
            <person name="Howe K.L."/>
            <person name="Ashurst J.L."/>
            <person name="Fulton R.S."/>
            <person name="Sudbrak R."/>
            <person name="Wen G."/>
            <person name="Jones M.C."/>
            <person name="Hurles M.E."/>
            <person name="Andrews T.D."/>
            <person name="Scott C.E."/>
            <person name="Searle S."/>
            <person name="Ramser J."/>
            <person name="Whittaker A."/>
            <person name="Deadman R."/>
            <person name="Carter N.P."/>
            <person name="Hunt S.E."/>
            <person name="Chen R."/>
            <person name="Cree A."/>
            <person name="Gunaratne P."/>
            <person name="Havlak P."/>
            <person name="Hodgson A."/>
            <person name="Metzker M.L."/>
            <person name="Richards S."/>
            <person name="Scott G."/>
            <person name="Steffen D."/>
            <person name="Sodergren E."/>
            <person name="Wheeler D.A."/>
            <person name="Worley K.C."/>
            <person name="Ainscough R."/>
            <person name="Ambrose K.D."/>
            <person name="Ansari-Lari M.A."/>
            <person name="Aradhya S."/>
            <person name="Ashwell R.I."/>
            <person name="Babbage A.K."/>
            <person name="Bagguley C.L."/>
            <person name="Ballabio A."/>
            <person name="Banerjee R."/>
            <person name="Barker G.E."/>
            <person name="Barlow K.F."/>
            <person name="Barrett I.P."/>
            <person name="Bates K.N."/>
            <person name="Beare D.M."/>
            <person name="Beasley H."/>
            <person name="Beasley O."/>
            <person name="Beck A."/>
            <person name="Bethel G."/>
            <person name="Blechschmidt K."/>
            <person name="Brady N."/>
            <person name="Bray-Allen S."/>
            <person name="Bridgeman A.M."/>
            <person name="Brown A.J."/>
            <person name="Brown M.J."/>
            <person name="Bonnin D."/>
            <person name="Bruford E.A."/>
            <person name="Buhay C."/>
            <person name="Burch P."/>
            <person name="Burford D."/>
            <person name="Burgess J."/>
            <person name="Burrill W."/>
            <person name="Burton J."/>
            <person name="Bye J.M."/>
            <person name="Carder C."/>
            <person name="Carrel L."/>
            <person name="Chako J."/>
            <person name="Chapman J.C."/>
            <person name="Chavez D."/>
            <person name="Chen E."/>
            <person name="Chen G."/>
            <person name="Chen Y."/>
            <person name="Chen Z."/>
            <person name="Chinault C."/>
            <person name="Ciccodicola A."/>
            <person name="Clark S.Y."/>
            <person name="Clarke G."/>
            <person name="Clee C.M."/>
            <person name="Clegg S."/>
            <person name="Clerc-Blankenburg K."/>
            <person name="Clifford K."/>
            <person name="Cobley V."/>
            <person name="Cole C.G."/>
            <person name="Conquer J.S."/>
            <person name="Corby N."/>
            <person name="Connor R.E."/>
            <person name="David R."/>
            <person name="Davies J."/>
            <person name="Davis C."/>
            <person name="Davis J."/>
            <person name="Delgado O."/>
            <person name="Deshazo D."/>
            <person name="Dhami P."/>
            <person name="Ding Y."/>
            <person name="Dinh H."/>
            <person name="Dodsworth S."/>
            <person name="Draper H."/>
            <person name="Dugan-Rocha S."/>
            <person name="Dunham A."/>
            <person name="Dunn M."/>
            <person name="Durbin K.J."/>
            <person name="Dutta I."/>
            <person name="Eades T."/>
            <person name="Ellwood M."/>
            <person name="Emery-Cohen A."/>
            <person name="Errington H."/>
            <person name="Evans K.L."/>
            <person name="Faulkner L."/>
            <person name="Francis F."/>
            <person name="Frankland J."/>
            <person name="Fraser A.E."/>
            <person name="Galgoczy P."/>
            <person name="Gilbert J."/>
            <person name="Gill R."/>
            <person name="Gloeckner G."/>
            <person name="Gregory S.G."/>
            <person name="Gribble S."/>
            <person name="Griffiths C."/>
            <person name="Grocock R."/>
            <person name="Gu Y."/>
            <person name="Gwilliam R."/>
            <person name="Hamilton C."/>
            <person name="Hart E.A."/>
            <person name="Hawes A."/>
            <person name="Heath P.D."/>
            <person name="Heitmann K."/>
            <person name="Hennig S."/>
            <person name="Hernandez J."/>
            <person name="Hinzmann B."/>
            <person name="Ho S."/>
            <person name="Hoffs M."/>
            <person name="Howden P.J."/>
            <person name="Huckle E.J."/>
            <person name="Hume J."/>
            <person name="Hunt P.J."/>
            <person name="Hunt A.R."/>
            <person name="Isherwood J."/>
            <person name="Jacob L."/>
            <person name="Johnson D."/>
            <person name="Jones S."/>
            <person name="de Jong P.J."/>
            <person name="Joseph S.S."/>
            <person name="Keenan S."/>
            <person name="Kelly S."/>
            <person name="Kershaw J.K."/>
            <person name="Khan Z."/>
            <person name="Kioschis P."/>
            <person name="Klages S."/>
            <person name="Knights A.J."/>
            <person name="Kosiura A."/>
            <person name="Kovar-Smith C."/>
            <person name="Laird G.K."/>
            <person name="Langford C."/>
            <person name="Lawlor S."/>
            <person name="Leversha M."/>
            <person name="Lewis L."/>
            <person name="Liu W."/>
            <person name="Lloyd C."/>
            <person name="Lloyd D.M."/>
            <person name="Loulseged H."/>
            <person name="Loveland J.E."/>
            <person name="Lovell J.D."/>
            <person name="Lozado R."/>
            <person name="Lu J."/>
            <person name="Lyne R."/>
            <person name="Ma J."/>
            <person name="Maheshwari M."/>
            <person name="Matthews L.H."/>
            <person name="McDowall J."/>
            <person name="McLaren S."/>
            <person name="McMurray A."/>
            <person name="Meidl P."/>
            <person name="Meitinger T."/>
            <person name="Milne S."/>
            <person name="Miner G."/>
            <person name="Mistry S.L."/>
            <person name="Morgan M."/>
            <person name="Morris S."/>
            <person name="Mueller I."/>
            <person name="Mullikin J.C."/>
            <person name="Nguyen N."/>
            <person name="Nordsiek G."/>
            <person name="Nyakatura G."/>
            <person name="O'dell C.N."/>
            <person name="Okwuonu G."/>
            <person name="Palmer S."/>
            <person name="Pandian R."/>
            <person name="Parker D."/>
            <person name="Parrish J."/>
            <person name="Pasternak S."/>
            <person name="Patel D."/>
            <person name="Pearce A.V."/>
            <person name="Pearson D.M."/>
            <person name="Pelan S.E."/>
            <person name="Perez L."/>
            <person name="Porter K.M."/>
            <person name="Ramsey Y."/>
            <person name="Reichwald K."/>
            <person name="Rhodes S."/>
            <person name="Ridler K.A."/>
            <person name="Schlessinger D."/>
            <person name="Schueler M.G."/>
            <person name="Sehra H.K."/>
            <person name="Shaw-Smith C."/>
            <person name="Shen H."/>
            <person name="Sheridan E.M."/>
            <person name="Shownkeen R."/>
            <person name="Skuce C.D."/>
            <person name="Smith M.L."/>
            <person name="Sotheran E.C."/>
            <person name="Steingruber H.E."/>
            <person name="Steward C.A."/>
            <person name="Storey R."/>
            <person name="Swann R.M."/>
            <person name="Swarbreck D."/>
            <person name="Tabor P.E."/>
            <person name="Taudien S."/>
            <person name="Taylor T."/>
            <person name="Teague B."/>
            <person name="Thomas K."/>
            <person name="Thorpe A."/>
            <person name="Timms K."/>
            <person name="Tracey A."/>
            <person name="Trevanion S."/>
            <person name="Tromans A.C."/>
            <person name="d'Urso M."/>
            <person name="Verduzco D."/>
            <person name="Villasana D."/>
            <person name="Waldron L."/>
            <person name="Wall M."/>
            <person name="Wang Q."/>
            <person name="Warren J."/>
            <person name="Warry G.L."/>
            <person name="Wei X."/>
            <person name="West A."/>
            <person name="Whitehead S.L."/>
            <person name="Whiteley M.N."/>
            <person name="Wilkinson J.E."/>
            <person name="Willey D.L."/>
            <person name="Williams G."/>
            <person name="Williams L."/>
            <person name="Williamson A."/>
            <person name="Williamson H."/>
            <person name="Wilming L."/>
            <person name="Woodmansey R.L."/>
            <person name="Wray P.W."/>
            <person name="Yen J."/>
            <person name="Zhang J."/>
            <person name="Zhou J."/>
            <person name="Zoghbi H."/>
            <person name="Zorilla S."/>
            <person name="Buck D."/>
            <person name="Reinhardt R."/>
            <person name="Poustka A."/>
            <person name="Rosenthal A."/>
            <person name="Lehrach H."/>
            <person name="Meindl A."/>
            <person name="Minx P.J."/>
            <person name="Hillier L.W."/>
            <person name="Willard H.F."/>
            <person name="Wilson R.K."/>
            <person name="Waterston R.H."/>
            <person name="Rice C.M."/>
            <person name="Vaudin M."/>
            <person name="Coulson A."/>
            <person name="Nelson D.L."/>
            <person name="Weinstock G."/>
            <person name="Sulston J.E."/>
            <person name="Durbin R.M."/>
            <person name="Hubbard T."/>
            <person name="Gibbs R.A."/>
            <person name="Beck S."/>
            <person name="Rogers J."/>
            <person name="Bentley D.R."/>
        </authorList>
    </citation>
    <scope>NUCLEOTIDE SEQUENCE [LARGE SCALE GENOMIC DNA]</scope>
</reference>
<reference key="5">
    <citation type="submission" date="2005-07" db="EMBL/GenBank/DDBJ databases">
        <authorList>
            <person name="Mural R.J."/>
            <person name="Istrail S."/>
            <person name="Sutton G."/>
            <person name="Florea L."/>
            <person name="Halpern A.L."/>
            <person name="Mobarry C.M."/>
            <person name="Lippert R."/>
            <person name="Walenz B."/>
            <person name="Shatkay H."/>
            <person name="Dew I."/>
            <person name="Miller J.R."/>
            <person name="Flanigan M.J."/>
            <person name="Edwards N.J."/>
            <person name="Bolanos R."/>
            <person name="Fasulo D."/>
            <person name="Halldorsson B.V."/>
            <person name="Hannenhalli S."/>
            <person name="Turner R."/>
            <person name="Yooseph S."/>
            <person name="Lu F."/>
            <person name="Nusskern D.R."/>
            <person name="Shue B.C."/>
            <person name="Zheng X.H."/>
            <person name="Zhong F."/>
            <person name="Delcher A.L."/>
            <person name="Huson D.H."/>
            <person name="Kravitz S.A."/>
            <person name="Mouchard L."/>
            <person name="Reinert K."/>
            <person name="Remington K.A."/>
            <person name="Clark A.G."/>
            <person name="Waterman M.S."/>
            <person name="Eichler E.E."/>
            <person name="Adams M.D."/>
            <person name="Hunkapiller M.W."/>
            <person name="Myers E.W."/>
            <person name="Venter J.C."/>
        </authorList>
    </citation>
    <scope>NUCLEOTIDE SEQUENCE [LARGE SCALE GENOMIC DNA]</scope>
</reference>
<reference key="6">
    <citation type="journal article" date="2004" name="Genome Res.">
        <title>The status, quality, and expansion of the NIH full-length cDNA project: the Mammalian Gene Collection (MGC).</title>
        <authorList>
            <consortium name="The MGC Project Team"/>
        </authorList>
    </citation>
    <scope>NUCLEOTIDE SEQUENCE [LARGE SCALE MRNA] (ISOFORMS 6; 13 AND 14)</scope>
    <scope>VARIANT GLN-2937</scope>
    <source>
        <tissue>Brain</tissue>
        <tissue>Placenta</tissue>
        <tissue>Testis</tissue>
    </source>
</reference>
<reference key="7">
    <citation type="submission" date="1996-01" db="EMBL/GenBank/DDBJ databases">
        <authorList>
            <person name="White R.A."/>
        </authorList>
    </citation>
    <scope>NUCLEOTIDE SEQUENCE [GENOMIC DNA] OF 1-1411 (ISOFORMS 4 AND 5)</scope>
    <source>
        <tissue>Retina</tissue>
    </source>
</reference>
<reference key="8">
    <citation type="journal article" date="1987" name="Cell">
        <title>Complete cloning of the Duchenne muscular dystrophy (DMD) cDNA and preliminary genomic organization of the DMD gene in normal and affected individuals.</title>
        <authorList>
            <person name="Koenig M."/>
            <person name="Hoffman E.P."/>
            <person name="Bertelson C.J."/>
            <person name="Monaco A.P."/>
            <person name="Feener C."/>
            <person name="Kunkel L.M."/>
        </authorList>
    </citation>
    <scope>NUCLEOTIDE SEQUENCE [MRNA] OF 1-497 (ISOFORM 1)</scope>
</reference>
<reference key="9">
    <citation type="journal article" date="1989" name="Nature">
        <title>Alternative splicing of human dystrophin mRNA generates isoforms at the carboxy terminus.</title>
        <authorList>
            <person name="Feener C.A."/>
            <person name="Koenig M."/>
            <person name="Kunkel L.M."/>
        </authorList>
    </citation>
    <scope>NUCLEOTIDE SEQUENCE [MRNA] OF 1-32 (ISOFORM 2)</scope>
    <scope>ALTERNATIVE PROMOTER USAGE</scope>
    <scope>ALTERNATIVE SPLICING</scope>
    <source>
        <tissue>Brain</tissue>
    </source>
</reference>
<reference key="10">
    <citation type="journal article" date="1987" name="EMBO J.">
        <title>Deletions of fetal and adult muscle cDNA in Duchenne and Becker muscular dystrophy patients.</title>
        <authorList>
            <person name="Cross G.S."/>
            <person name="Speer A."/>
            <person name="Rosenthal A."/>
            <person name="Forrest S.M."/>
            <person name="Smith T.J."/>
            <person name="Edwards Y."/>
            <person name="Flint T."/>
            <person name="Hill D."/>
            <person name="Davies K.E."/>
        </authorList>
    </citation>
    <scope>NUCLEOTIDE SEQUENCE [MRNA] OF 404-1137</scope>
    <scope>VARIANT GLY-882</scope>
</reference>
<reference key="11">
    <citation type="journal article" date="1988" name="Nucleic Acids Res.">
        <title>Deletion screening of the Duchenne muscular dystrophy locus via multiplex DNA amplification.</title>
        <authorList>
            <person name="Chamberlain J.S."/>
            <person name="Gibbs R.A."/>
            <person name="Ranier J.A."/>
            <person name="Nguyen P.N."/>
            <person name="Caskey C.T."/>
        </authorList>
    </citation>
    <scope>NUCLEOTIDE SEQUENCE [GENOMIC DNA] OF 665-722; 2098-2204 AND 2305-2366</scope>
</reference>
<reference key="12">
    <citation type="journal article" date="1989" name="Nucleic Acids Res.">
        <title>High resolution deletion breakpoint mapping in the DMD gene by whole cosmid hybridization.</title>
        <authorList>
            <person name="Blonden L.A.J."/>
            <person name="den Dunnen J.T."/>
            <person name="van Paassen H.M.B."/>
            <person name="Wapenaar M.C."/>
            <person name="Grootscholten P.M."/>
            <person name="Ginjaar H.B."/>
            <person name="Bakker E."/>
            <person name="Pearson P.L."/>
            <person name="van Ommen G.J.B."/>
        </authorList>
    </citation>
    <scope>NUCLEOTIDE SEQUENCE [GENOMIC DNA] OF 2147-2204</scope>
</reference>
<reference key="13">
    <citation type="submission" date="1991-03" db="EMBL/GenBank/DDBJ databases">
        <title>Differences in introns flanking exon 48 of the DMD/BMD gene.</title>
        <authorList>
            <person name="Huth A."/>
            <person name="Will K."/>
            <person name="Speer A."/>
            <person name="Bauer D."/>
        </authorList>
    </citation>
    <scope>NUCLEOTIDE SEQUENCE [GENOMIC DNA] OF 2305-2364</scope>
</reference>
<reference key="14">
    <citation type="journal article" date="1995" name="Hum. Mol. Genet.">
        <title>Cloning and characterization of alternatively spliced isoforms of Dp71.</title>
        <authorList>
            <person name="Austin R.C."/>
            <person name="Howard P.L."/>
            <person name="D'Souza V.N."/>
            <person name="Klamut H.J."/>
            <person name="Ray P.N."/>
        </authorList>
    </citation>
    <scope>NUCLEOTIDE SEQUENCE [MRNA] OF 3670-3685</scope>
    <scope>TISSUE SPECIFICITY</scope>
    <source>
        <tissue>Amnion</tissue>
    </source>
</reference>
<reference key="15">
    <citation type="journal article" date="1990" name="J. Biol. Chem.">
        <title>Detailed analysis of the repeat domain of dystrophin reveals four potential hinge segments that may confer flexibility.</title>
        <authorList>
            <person name="Koenig M."/>
            <person name="Kunkel L.M."/>
        </authorList>
    </citation>
    <scope>ANALYSIS OF THE DOMAIN STRUCTURE</scope>
</reference>
<reference key="16">
    <citation type="journal article" date="1995" name="J. Biol. Chem.">
        <title>Identification and characterization of the dystrophin anchoring site on beta-dystroglycan.</title>
        <authorList>
            <person name="Jung D."/>
            <person name="Yang B."/>
            <person name="Meyer J."/>
            <person name="Chamberlain J.S."/>
            <person name="Campbell K.P."/>
        </authorList>
    </citation>
    <scope>INTERACTION WITH DAG1</scope>
</reference>
<reference key="17">
    <citation type="journal article" date="1995" name="J. Cell Biol.">
        <title>Syntrophin binds to an alternatively spliced exon of dystrophin.</title>
        <authorList>
            <person name="Ahn A.H."/>
            <person name="Kunkel L.M."/>
        </authorList>
    </citation>
    <scope>INTERACTION WITH SNTB1</scope>
</reference>
<reference key="18">
    <citation type="journal article" date="1996" name="J. Biol. Chem.">
        <title>The three human syntrophin genes are expressed in diverse tissues, have distinct chromosomal locations, and each bind to dystrophin and its relatives.</title>
        <authorList>
            <person name="Ahn A.H."/>
            <person name="Feener C.A."/>
            <person name="Gussoni E."/>
            <person name="Yoshida M."/>
            <person name="Ozawa E."/>
            <person name="Kunkel L.M."/>
        </authorList>
    </citation>
    <scope>INTERACTION WITH SNTA1 AND SNTB2</scope>
</reference>
<reference key="19">
    <citation type="journal article" date="1997" name="Brain Res. Dev. Brain Res.">
        <title>A splice variant of Dp71 lacking the syntrophin binding site is expressed in early stages of human neural development.</title>
        <authorList>
            <person name="Ceccarini M."/>
            <person name="Rizzo G."/>
            <person name="Rosa G."/>
            <person name="Chelucci C."/>
            <person name="Macioce P."/>
            <person name="Petrucci T.C."/>
        </authorList>
    </citation>
    <scope>ALTERNATIVE SPLICING (ISOFORMS 15 AND 16)</scope>
    <scope>DEVELOPMENTAL STAGE</scope>
    <source>
        <tissue>Telencephalon</tissue>
    </source>
</reference>
<reference key="20">
    <citation type="journal article" date="2000" name="J. Biol. Chem.">
        <title>Gamma1- and gamma2-syntrophins, two novel dystrophin-binding proteins localized in neuronal cells.</title>
        <authorList>
            <person name="Piluso G."/>
            <person name="Mirabella M."/>
            <person name="Ricci E."/>
            <person name="Belsito A."/>
            <person name="Abbondanza C."/>
            <person name="Servidei S."/>
            <person name="Puca A.A."/>
            <person name="Tonali P."/>
            <person name="Puca G.A."/>
            <person name="Nigro V."/>
        </authorList>
    </citation>
    <scope>INTERACTION WITH SNTG1 AND SNTG2</scope>
</reference>
<reference key="21">
    <citation type="journal article" date="2000" name="Neuromuscul. Disord.">
        <title>Expression and synthesis of alternatively spliced variants of Dp71 in adult human brain.</title>
        <authorList>
            <person name="Austin R.C."/>
            <person name="Morris G.E."/>
            <person name="Howard P.L."/>
            <person name="Klamut H.J."/>
            <person name="Ray P.N."/>
        </authorList>
    </citation>
    <scope>ALTERNATIVE SPLICING (ISOFORM 16)</scope>
    <source>
        <tissue>Brain</tissue>
    </source>
</reference>
<reference key="22">
    <citation type="journal article" date="2001" name="Cell. Signal.">
        <title>The interaction of dystrophin with beta-dystroglycan is regulated by tyrosine phosphorylation.</title>
        <authorList>
            <person name="Ilsley J.L."/>
            <person name="Sudol M."/>
            <person name="Winder S.J."/>
        </authorList>
    </citation>
    <scope>INTERACTION WITH DAG1</scope>
</reference>
<reference key="23">
    <citation type="journal article" date="2003" name="Lancet Neurol.">
        <title>Dystrophin and mutations: one gene, several proteins, multiple phenotypes.</title>
        <authorList>
            <person name="Muntoni F."/>
            <person name="Torelli S."/>
            <person name="Ferlini A."/>
        </authorList>
    </citation>
    <scope>REVIEW ON ALTERNATIVE PROMOTER USAGE</scope>
</reference>
<reference key="24">
    <citation type="journal article" date="2005" name="Mol. Biol. Cell">
        <title>Specific interaction of the actin-binding domain of dystrophin with intermediate filaments containing keratin 19.</title>
        <authorList>
            <person name="Stone M.R."/>
            <person name="O'Neill A."/>
            <person name="Catino D."/>
            <person name="Bloch R.J."/>
        </authorList>
    </citation>
    <scope>INTERACTION WITH KRT19</scope>
    <scope>TISSUE SPECIFICITY</scope>
</reference>
<reference key="25">
    <citation type="journal article" date="2006" name="Cell">
        <title>Global, in vivo, and site-specific phosphorylation dynamics in signaling networks.</title>
        <authorList>
            <person name="Olsen J.V."/>
            <person name="Blagoev B."/>
            <person name="Gnad F."/>
            <person name="Macek B."/>
            <person name="Kumar C."/>
            <person name="Mortensen P."/>
            <person name="Mann M."/>
        </authorList>
    </citation>
    <scope>IDENTIFICATION BY MASS SPECTROMETRY [LARGE SCALE ANALYSIS]</scope>
    <source>
        <tissue>Cervix carcinoma</tissue>
    </source>
</reference>
<reference key="26">
    <citation type="journal article" date="2006" name="Cell. Mol. Life Sci.">
        <title>Role of dystrophin and utrophin for assembly and function of the dystrophin glycoprotein complex in non-muscle tissue.</title>
        <authorList>
            <person name="Haenggi T."/>
            <person name="Fritschy J.M."/>
        </authorList>
    </citation>
    <scope>FUNCTION IN THE DYSTROPHIN-ASSOCIATED GLYCOPROTEIN COMPLEX</scope>
</reference>
<reference key="27">
    <citation type="journal article" date="2008" name="Proc. Natl. Acad. Sci. U.S.A.">
        <title>A quantitative atlas of mitotic phosphorylation.</title>
        <authorList>
            <person name="Dephoure N."/>
            <person name="Zhou C."/>
            <person name="Villen J."/>
            <person name="Beausoleil S.A."/>
            <person name="Bakalarski C.E."/>
            <person name="Elledge S.J."/>
            <person name="Gygi S.P."/>
        </authorList>
    </citation>
    <scope>PHOSPHORYLATION [LARGE SCALE ANALYSIS] AT SER-3483; SER-3613; SER-3617; SER-3623 AND SER-3666</scope>
    <scope>PHOSPHORYLATION [LARGE SCALE ANALYSIS] AT THR-340; SER-344 AND SER-348 (ISOFORMS 13 AND 15)</scope>
    <scope>IDENTIFICATION BY MASS SPECTROMETRY [LARGE SCALE ANALYSIS]</scope>
    <source>
        <tissue>Cervix carcinoma</tissue>
    </source>
</reference>
<reference key="28">
    <citation type="journal article" date="2009" name="Anal. Chem.">
        <title>Lys-N and trypsin cover complementary parts of the phosphoproteome in a refined SCX-based approach.</title>
        <authorList>
            <person name="Gauci S."/>
            <person name="Helbig A.O."/>
            <person name="Slijper M."/>
            <person name="Krijgsveld J."/>
            <person name="Heck A.J."/>
            <person name="Mohammed S."/>
        </authorList>
    </citation>
    <scope>IDENTIFICATION BY MASS SPECTROMETRY [LARGE SCALE ANALYSIS]</scope>
</reference>
<reference key="29">
    <citation type="journal article" date="2010" name="Sci. Signal.">
        <title>Quantitative phosphoproteomics reveals widespread full phosphorylation site occupancy during mitosis.</title>
        <authorList>
            <person name="Olsen J.V."/>
            <person name="Vermeulen M."/>
            <person name="Santamaria A."/>
            <person name="Kumar C."/>
            <person name="Miller M.L."/>
            <person name="Jensen L.J."/>
            <person name="Gnad F."/>
            <person name="Cox J."/>
            <person name="Jensen T.S."/>
            <person name="Nigg E.A."/>
            <person name="Brunak S."/>
            <person name="Mann M."/>
        </authorList>
    </citation>
    <scope>PHOSPHORYLATION [LARGE SCALE ANALYSIS] AT SER-3612; SER-3613 AND SER-3623</scope>
    <scope>IDENTIFICATION BY MASS SPECTROMETRY [LARGE SCALE ANALYSIS]</scope>
    <source>
        <tissue>Cervix carcinoma</tissue>
    </source>
</reference>
<reference key="30">
    <citation type="journal article" date="2011" name="BMC Syst. Biol.">
        <title>Initial characterization of the human central proteome.</title>
        <authorList>
            <person name="Burkard T.R."/>
            <person name="Planyavsky M."/>
            <person name="Kaupe I."/>
            <person name="Breitwieser F.P."/>
            <person name="Buerckstuemmer T."/>
            <person name="Bennett K.L."/>
            <person name="Superti-Furga G."/>
            <person name="Colinge J."/>
        </authorList>
    </citation>
    <scope>IDENTIFICATION BY MASS SPECTROMETRY [LARGE SCALE ANALYSIS]</scope>
</reference>
<reference key="31">
    <citation type="journal article" date="2013" name="J. Proteome Res.">
        <title>Toward a comprehensive characterization of a human cancer cell phosphoproteome.</title>
        <authorList>
            <person name="Zhou H."/>
            <person name="Di Palma S."/>
            <person name="Preisinger C."/>
            <person name="Peng M."/>
            <person name="Polat A.N."/>
            <person name="Heck A.J."/>
            <person name="Mohammed S."/>
        </authorList>
    </citation>
    <scope>PHOSPHORYLATION [LARGE SCALE ANALYSIS] AT SER-3612; SER-3623 AND SER-3624</scope>
    <scope>IDENTIFICATION BY MASS SPECTROMETRY [LARGE SCALE ANALYSIS]</scope>
    <source>
        <tissue>Cervix carcinoma</tissue>
        <tissue>Erythroleukemia</tissue>
    </source>
</reference>
<reference key="32">
    <citation type="journal article" date="2014" name="J. Proteomics">
        <title>An enzyme assisted RP-RPLC approach for in-depth analysis of human liver phosphoproteome.</title>
        <authorList>
            <person name="Bian Y."/>
            <person name="Song C."/>
            <person name="Cheng K."/>
            <person name="Dong M."/>
            <person name="Wang F."/>
            <person name="Huang J."/>
            <person name="Sun D."/>
            <person name="Wang L."/>
            <person name="Ye M."/>
            <person name="Zou H."/>
        </authorList>
    </citation>
    <scope>PHOSPHORYLATION [LARGE SCALE ANALYSIS] AT SER-3490; SER-3500; SER-3623; SER-3624 AND SER-3666</scope>
    <scope>PHOSPHORYLATION [LARGE SCALE ANALYSIS] AT THR-616 (ISOFORM 15)</scope>
    <scope>PHOSPHORYLATION [LARGE SCALE ANALYSIS] AT THR-629 (ISOFORM 14)</scope>
    <scope>PHOSPHORYLATION [LARGE SCALE ANALYSIS] AT THR-519 (ISOFORM 16)</scope>
    <scope>IDENTIFICATION BY MASS SPECTROMETRY [LARGE SCALE ANALYSIS]</scope>
    <source>
        <tissue>Liver</tissue>
    </source>
</reference>
<reference key="33">
    <citation type="journal article" date="2000" name="Nat. Struct. Biol.">
        <title>Structure of a WW domain containing fragment of dystrophin in complex with beta-dystroglycan.</title>
        <authorList>
            <person name="Huang X."/>
            <person name="Poy F."/>
            <person name="Zhang R."/>
            <person name="Joachimiak A."/>
            <person name="Sudol M."/>
            <person name="Eck M.J."/>
        </authorList>
    </citation>
    <scope>X-RAY CRYSTALLOGRAPHY (2.0 ANGSTROMS) OF 3046-3306 IN COMPLEX WITH DAG1</scope>
    <scope>INTERACTION WITH DAG1</scope>
</reference>
<reference key="34">
    <citation type="journal article" date="2000" name="Structure">
        <title>The structure of the N-terminal actin-binding domain of human dystrophin and how mutations in this domain may cause Duchenne or Becker muscular dystrophy.</title>
        <authorList>
            <person name="Norwood F.L.M."/>
            <person name="Sutherland-Smith A.J."/>
            <person name="Keep N.H."/>
            <person name="Kendrick-Jones J."/>
        </authorList>
    </citation>
    <scope>X-RAY CRYSTALLOGRAPHY (2.6 ANGSTROMS) OF 1-246</scope>
</reference>
<reference key="35">
    <citation type="journal article" date="1994" name="Hum. Mutat.">
        <title>Searching for the 1 in 2,400,000: a review of dystrophin gene point mutations.</title>
        <authorList>
            <person name="Roberts R.G."/>
            <person name="Gardner R.J."/>
            <person name="Bobrow M."/>
        </authorList>
    </citation>
    <scope>REVIEW ON DMD VARIANTS</scope>
    <scope>VARIANTS BMD 32-PHE--LEU-62 DEL; ASP-168 AND ASN-231</scope>
</reference>
<reference key="36">
    <citation type="journal article" date="1994" name="Hum. Genet.">
        <title>Microlesions and polymorphisms in the Duchenne/Becker muscular dystrophy gene.</title>
        <authorList>
            <person name="Rininsland F."/>
            <person name="Reiss J."/>
        </authorList>
    </citation>
    <scope>REVIEW ON VARIANTS</scope>
</reference>
<reference key="37">
    <citation type="journal article" date="1993" name="Nat. Genet.">
        <title>A missense mutation in the dystrophin gene in a Duchenne muscular dystrophy patient.</title>
        <authorList>
            <person name="Prior T.W."/>
            <person name="Papp A.C."/>
            <person name="Snyder P.J."/>
            <person name="Burghes A.H.M."/>
            <person name="Bartolo C."/>
            <person name="Sedra M.S."/>
            <person name="Western L.M."/>
            <person name="Mendell J.R."/>
        </authorList>
    </citation>
    <scope>VARIANT DMD ARG-54</scope>
</reference>
<reference key="38">
    <citation type="journal article" date="1993" name="Hum. Mol. Genet.">
        <title>Point mutations at the carboxy terminus of the human dystrophin gene: implications for an association with mental retardation in DMD patients.</title>
        <authorList>
            <person name="Lenk U."/>
            <person name="Hanke R."/>
            <person name="Thiele H."/>
            <person name="Speer A."/>
        </authorList>
    </citation>
    <scope>VARIANT BMD VAL-3421</scope>
</reference>
<reference key="39">
    <citation type="journal article" date="1994" name="Hum. Mol. Genet.">
        <title>Identification of a missense mutation, single base deletion and a polymorphism in the dystrophin exon 16.</title>
        <authorList>
            <person name="Prior T.W."/>
            <person name="Bartolo C."/>
            <person name="Papp A.C."/>
            <person name="Snyder P.J."/>
            <person name="Sedra M.S."/>
            <person name="Burghes A.H."/>
            <person name="Mendell J.R."/>
        </authorList>
    </citation>
    <scope>VARIANT DMD GLY-645</scope>
</reference>
<reference key="40">
    <citation type="journal article" date="1994" name="Hum. Mol. Genet.">
        <title>Novel small mutations along the DMD/BMD gene associated with different phenotypes.</title>
        <authorList>
            <person name="Nigro V."/>
            <person name="Nigro G."/>
            <person name="Esposito M.G."/>
            <person name="Comi L.I."/>
            <person name="Molinari A.M."/>
            <person name="Puca G.A."/>
            <person name="Politano L."/>
        </authorList>
    </citation>
    <scope>VARIANTS HIS-365 AND TRP-2191</scope>
</reference>
<reference key="41">
    <citation type="journal article" date="1994" name="Neuromuscul. Disord.">
        <title>A possible missense mutation detected in the dystrophin gene by Double-Strand Conformation Analysis (DSCA).</title>
        <authorList>
            <person name="Saad F.A."/>
            <person name="Vita G."/>
            <person name="Toffolatti L."/>
            <person name="Danieli G.A."/>
        </authorList>
    </citation>
    <scope>VARIANT DMD GLU-773</scope>
</reference>
<reference key="42">
    <citation type="journal article" date="1996" name="Hum. Mol. Genet.">
        <title>A cysteine 3340 substitution in the dystroglycan-binding domain of dystrophin associated with Duchenne muscular dystrophy, mental retardation and absence of the ERG b-wave.</title>
        <authorList>
            <person name="Lenk U."/>
            <person name="Oexle K."/>
            <person name="Voit T."/>
            <person name="Ancker U."/>
            <person name="Hellner K.A."/>
            <person name="Speer A."/>
            <person name="Hubner C."/>
        </authorList>
    </citation>
    <scope>VARIANT DMD TYR-3340</scope>
</reference>
<reference key="43">
    <citation type="journal article" date="1997" name="Circulation">
        <title>Evidence for a dystrophin missense mutation as a cause of X-linked dilated cardiomyopathy.</title>
        <authorList>
            <person name="Ortiz-Lopez R."/>
            <person name="Li H."/>
            <person name="Su J."/>
            <person name="Goytia V."/>
            <person name="Towbin J.A."/>
        </authorList>
    </citation>
    <scope>VARIANT CMD3B ALA-279</scope>
</reference>
<reference key="44">
    <citation type="journal article" date="1998" name="Ann. Neurol.">
        <title>A dystrophin missense mutation showing persistence of dystrophin and dystrophin-associated proteins yet a severe phenotype.</title>
        <authorList>
            <person name="Goldberg L.R."/>
            <person name="Hausmanowa-Petrusewicz I."/>
            <person name="Fidzianska A."/>
            <person name="Duggan D.J."/>
            <person name="Steinberg L.S."/>
            <person name="Hoffman E.P."/>
        </authorList>
    </citation>
    <scope>VARIANT DMD HIS-3335</scope>
</reference>
<reference key="45">
    <citation type="journal article" date="1999" name="Eur. J. Hum. Genet.">
        <title>Identification of point mutations in Turkish DMD/BMD families using multiplex-single stranded conformation analysis (SSCA).</title>
        <authorList>
            <person name="Eraslan S."/>
            <person name="Kayserili H."/>
            <person name="Apak M.Y."/>
            <person name="Kirdar B."/>
        </authorList>
    </citation>
    <scope>VARIANT BMD PRO-171</scope>
</reference>
<reference key="46">
    <citation type="journal article" date="2002" name="J. Am. Coll. Cardiol.">
        <title>Comprehensive mutation scanning of the dystrophin gene in patients with nonsyndromic X-linked dilated cardiomyopathy.</title>
        <authorList>
            <person name="Feng J."/>
            <person name="Yan J.Y."/>
            <person name="Buzin C.H."/>
            <person name="Sommer S.S."/>
            <person name="Towbin J.A."/>
        </authorList>
    </citation>
    <scope>VARIANT LYS-1672</scope>
</reference>
<reference key="47">
    <citation type="journal article" date="2002" name="Mol. Genet. Metab.">
        <title>Mutations in the dystrophin gene are associated with sporadic dilated cardiomyopathy.</title>
        <authorList>
            <person name="Feng J."/>
            <person name="Yan J."/>
            <person name="Buzin C.H."/>
            <person name="Towbin J.A."/>
            <person name="Sommer S.S."/>
        </authorList>
    </citation>
    <scope>VARIANTS CMD3B ASN-18 AND LEU-3228</scope>
    <scope>VARIANTS TRP-2155; THR-2299; GLN-2366; VAL-2910 AND ASP-2912</scope>
</reference>
<reference key="48">
    <citation type="journal article" date="2003" name="Am. J. Hum. Genet.">
        <title>Rapid direct sequence analysis of the dystrophin gene.</title>
        <authorList>
            <person name="Flanigan K.M."/>
            <person name="von Niederhausern A."/>
            <person name="Dunn D.M."/>
            <person name="Alder J."/>
            <person name="Mendell J.R."/>
            <person name="Weiss R.B."/>
        </authorList>
    </citation>
    <scope>VARIANT DMD PHE-3313</scope>
    <scope>VARIANT VAL-165</scope>
</reference>
<reference key="49">
    <citation type="journal article" date="2006" name="Science">
        <title>The consensus coding sequences of human breast and colorectal cancers.</title>
        <authorList>
            <person name="Sjoeblom T."/>
            <person name="Jones S."/>
            <person name="Wood L.D."/>
            <person name="Parsons D.W."/>
            <person name="Lin J."/>
            <person name="Barber T.D."/>
            <person name="Mandelker D."/>
            <person name="Leary R.J."/>
            <person name="Ptak J."/>
            <person name="Silliman N."/>
            <person name="Szabo S."/>
            <person name="Buckhaults P."/>
            <person name="Farrell C."/>
            <person name="Meeh P."/>
            <person name="Markowitz S.D."/>
            <person name="Willis J."/>
            <person name="Dawson D."/>
            <person name="Willson J.K.V."/>
            <person name="Gazdar A.F."/>
            <person name="Hartigan J."/>
            <person name="Wu L."/>
            <person name="Liu C."/>
            <person name="Parmigiani G."/>
            <person name="Park B.H."/>
            <person name="Bachman K.E."/>
            <person name="Papadopoulos N."/>
            <person name="Vogelstein B."/>
            <person name="Kinzler K.W."/>
            <person name="Velculescu V.E."/>
        </authorList>
    </citation>
    <scope>VARIANTS [LARGE SCALE ANALYSIS] PHE-334; GLN-1219; HIS-1470 AND VAL-2164</scope>
</reference>
<reference key="50">
    <citation type="journal article" date="2011" name="BMC Med. Genet.">
        <title>Clinical and molecular characterization of a cohort of patients with novel nucleotide alterations of the Dystrophin gene detected by direct sequencing.</title>
        <authorList>
            <person name="Magri F."/>
            <person name="Del Bo R."/>
            <person name="D'Angelo M.G."/>
            <person name="Govoni A."/>
            <person name="Ghezzi S."/>
            <person name="Gandossini S."/>
            <person name="Sciacco M."/>
            <person name="Ciscato P."/>
            <person name="Bordoni A."/>
            <person name="Tedeschi S."/>
            <person name="Fortunato F."/>
            <person name="Lucchini V."/>
            <person name="Cereda M."/>
            <person name="Corti S."/>
            <person name="Moggio M."/>
            <person name="Bresolin N."/>
            <person name="Comi G.P."/>
        </authorList>
    </citation>
    <scope>VARIANT ARG-118</scope>
</reference>
<reference key="51">
    <citation type="journal article" date="2014" name="Hum. Mutat.">
        <title>The ZZ domain of dystrophin in DMD: making sense of missense mutations.</title>
        <authorList>
            <person name="Vulin A."/>
            <person name="Wein N."/>
            <person name="Strandjord D.M."/>
            <person name="Johnson E.K."/>
            <person name="Findlay A.R."/>
            <person name="Maiti B."/>
            <person name="Howard M.T."/>
            <person name="Kaminoh Y.J."/>
            <person name="Taylor L.E."/>
            <person name="Simmons T.R."/>
            <person name="Ray W.C."/>
            <person name="Montanaro F."/>
            <person name="Ervasti J.M."/>
            <person name="Flanigan K.M."/>
        </authorList>
    </citation>
    <scope>CHARACTERIZATION OF VARIANTS DMD PHE-3313; HIS-3335 AND TYR-3340</scope>
</reference>
<reference key="52">
    <citation type="journal article" date="2014" name="PLoS ONE">
        <title>Missense mutation Lys18Asn in dystrophin that triggers X-linked dilated cardiomyopathy decreases protein stability, increases protein unfolding, and perturbs protein structure, but does not affect protein function.</title>
        <authorList>
            <person name="Singh S.M."/>
            <person name="Bandi S."/>
            <person name="Shah D.D."/>
            <person name="Armstrong G."/>
            <person name="Mallela K.M."/>
        </authorList>
    </citation>
    <scope>CHARACTERIZATION OF VARIANT CMD3B ASN-18</scope>
</reference>
<proteinExistence type="evidence at protein level"/>
<dbReference type="EMBL" id="M18533">
    <property type="protein sequence ID" value="AAA53189.1"/>
    <property type="molecule type" value="mRNA"/>
</dbReference>
<dbReference type="EMBL" id="X14298">
    <property type="protein sequence ID" value="CAA32479.1"/>
    <property type="molecule type" value="mRNA"/>
</dbReference>
<dbReference type="EMBL" id="M92650">
    <property type="protein sequence ID" value="AAA52316.1"/>
    <property type="molecule type" value="mRNA"/>
</dbReference>
<dbReference type="EMBL" id="AC078957">
    <property type="status" value="NOT_ANNOTATED_CDS"/>
    <property type="molecule type" value="Genomic_DNA"/>
</dbReference>
<dbReference type="EMBL" id="AL031542">
    <property type="protein sequence ID" value="CAI42229.1"/>
    <property type="molecule type" value="Genomic_DNA"/>
</dbReference>
<dbReference type="EMBL" id="AC004468">
    <property type="protein sequence ID" value="CAI42229.1"/>
    <property type="status" value="JOINED"/>
    <property type="molecule type" value="Genomic_DNA"/>
</dbReference>
<dbReference type="EMBL" id="AC006061">
    <property type="protein sequence ID" value="CAI42229.1"/>
    <property type="status" value="JOINED"/>
    <property type="molecule type" value="Genomic_DNA"/>
</dbReference>
<dbReference type="EMBL" id="AC078958">
    <property type="protein sequence ID" value="CAI42229.1"/>
    <property type="status" value="JOINED"/>
    <property type="molecule type" value="Genomic_DNA"/>
</dbReference>
<dbReference type="EMBL" id="AC079143">
    <property type="protein sequence ID" value="CAI42229.1"/>
    <property type="status" value="JOINED"/>
    <property type="molecule type" value="Genomic_DNA"/>
</dbReference>
<dbReference type="EMBL" id="AC079175">
    <property type="protein sequence ID" value="CAI42229.1"/>
    <property type="status" value="JOINED"/>
    <property type="molecule type" value="Genomic_DNA"/>
</dbReference>
<dbReference type="EMBL" id="AC079177">
    <property type="protein sequence ID" value="CAI42229.1"/>
    <property type="status" value="JOINED"/>
    <property type="molecule type" value="Genomic_DNA"/>
</dbReference>
<dbReference type="EMBL" id="AC079864">
    <property type="protein sequence ID" value="CAI42229.1"/>
    <property type="status" value="JOINED"/>
    <property type="molecule type" value="Genomic_DNA"/>
</dbReference>
<dbReference type="EMBL" id="AC090632">
    <property type="protein sequence ID" value="CAI42229.1"/>
    <property type="status" value="JOINED"/>
    <property type="molecule type" value="Genomic_DNA"/>
</dbReference>
<dbReference type="EMBL" id="AC093167">
    <property type="protein sequence ID" value="CAI42229.1"/>
    <property type="status" value="JOINED"/>
    <property type="molecule type" value="Genomic_DNA"/>
</dbReference>
<dbReference type="EMBL" id="AC093193">
    <property type="protein sequence ID" value="CAI42229.1"/>
    <property type="status" value="JOINED"/>
    <property type="molecule type" value="Genomic_DNA"/>
</dbReference>
<dbReference type="EMBL" id="AC096506">
    <property type="protein sequence ID" value="CAI42229.1"/>
    <property type="status" value="JOINED"/>
    <property type="molecule type" value="Genomic_DNA"/>
</dbReference>
<dbReference type="EMBL" id="AL031643">
    <property type="protein sequence ID" value="CAI42229.1"/>
    <property type="status" value="JOINED"/>
    <property type="molecule type" value="Genomic_DNA"/>
</dbReference>
<dbReference type="EMBL" id="AL096699">
    <property type="protein sequence ID" value="CAI42229.1"/>
    <property type="status" value="JOINED"/>
    <property type="molecule type" value="Genomic_DNA"/>
</dbReference>
<dbReference type="EMBL" id="AL109609">
    <property type="protein sequence ID" value="CAI42229.1"/>
    <property type="status" value="JOINED"/>
    <property type="molecule type" value="Genomic_DNA"/>
</dbReference>
<dbReference type="EMBL" id="AL139278">
    <property type="protein sequence ID" value="CAI42229.1"/>
    <property type="status" value="JOINED"/>
    <property type="molecule type" value="Genomic_DNA"/>
</dbReference>
<dbReference type="EMBL" id="AL451144">
    <property type="protein sequence ID" value="CAI42229.1"/>
    <property type="status" value="JOINED"/>
    <property type="molecule type" value="Genomic_DNA"/>
</dbReference>
<dbReference type="EMBL" id="AL031643">
    <property type="protein sequence ID" value="CAI43058.1"/>
    <property type="molecule type" value="Genomic_DNA"/>
</dbReference>
<dbReference type="EMBL" id="AC004468">
    <property type="protein sequence ID" value="CAI43058.1"/>
    <property type="status" value="JOINED"/>
    <property type="molecule type" value="Genomic_DNA"/>
</dbReference>
<dbReference type="EMBL" id="AC006061">
    <property type="protein sequence ID" value="CAI43058.1"/>
    <property type="status" value="JOINED"/>
    <property type="molecule type" value="Genomic_DNA"/>
</dbReference>
<dbReference type="EMBL" id="AC078958">
    <property type="protein sequence ID" value="CAI43058.1"/>
    <property type="status" value="JOINED"/>
    <property type="molecule type" value="Genomic_DNA"/>
</dbReference>
<dbReference type="EMBL" id="AC079143">
    <property type="protein sequence ID" value="CAI43058.1"/>
    <property type="status" value="JOINED"/>
    <property type="molecule type" value="Genomic_DNA"/>
</dbReference>
<dbReference type="EMBL" id="AC079175">
    <property type="protein sequence ID" value="CAI43058.1"/>
    <property type="status" value="JOINED"/>
    <property type="molecule type" value="Genomic_DNA"/>
</dbReference>
<dbReference type="EMBL" id="AC079177">
    <property type="protein sequence ID" value="CAI43058.1"/>
    <property type="status" value="JOINED"/>
    <property type="molecule type" value="Genomic_DNA"/>
</dbReference>
<dbReference type="EMBL" id="AC079864">
    <property type="protein sequence ID" value="CAI43058.1"/>
    <property type="status" value="JOINED"/>
    <property type="molecule type" value="Genomic_DNA"/>
</dbReference>
<dbReference type="EMBL" id="AC090632">
    <property type="protein sequence ID" value="CAI43058.1"/>
    <property type="status" value="JOINED"/>
    <property type="molecule type" value="Genomic_DNA"/>
</dbReference>
<dbReference type="EMBL" id="AC093167">
    <property type="protein sequence ID" value="CAI43058.1"/>
    <property type="status" value="JOINED"/>
    <property type="molecule type" value="Genomic_DNA"/>
</dbReference>
<dbReference type="EMBL" id="AC093193">
    <property type="protein sequence ID" value="CAI43058.1"/>
    <property type="status" value="JOINED"/>
    <property type="molecule type" value="Genomic_DNA"/>
</dbReference>
<dbReference type="EMBL" id="AC096506">
    <property type="protein sequence ID" value="CAI43058.1"/>
    <property type="status" value="JOINED"/>
    <property type="molecule type" value="Genomic_DNA"/>
</dbReference>
<dbReference type="EMBL" id="AL031542">
    <property type="protein sequence ID" value="CAI43058.1"/>
    <property type="status" value="JOINED"/>
    <property type="molecule type" value="Genomic_DNA"/>
</dbReference>
<dbReference type="EMBL" id="AL096699">
    <property type="protein sequence ID" value="CAI43058.1"/>
    <property type="status" value="JOINED"/>
    <property type="molecule type" value="Genomic_DNA"/>
</dbReference>
<dbReference type="EMBL" id="AL109609">
    <property type="protein sequence ID" value="CAI43058.1"/>
    <property type="status" value="JOINED"/>
    <property type="molecule type" value="Genomic_DNA"/>
</dbReference>
<dbReference type="EMBL" id="AL139278">
    <property type="protein sequence ID" value="CAI43058.1"/>
    <property type="status" value="JOINED"/>
    <property type="molecule type" value="Genomic_DNA"/>
</dbReference>
<dbReference type="EMBL" id="AL451144">
    <property type="protein sequence ID" value="CAI43058.1"/>
    <property type="status" value="JOINED"/>
    <property type="molecule type" value="Genomic_DNA"/>
</dbReference>
<dbReference type="EMBL" id="AL049643">
    <property type="status" value="NOT_ANNOTATED_CDS"/>
    <property type="molecule type" value="Genomic_DNA"/>
</dbReference>
<dbReference type="EMBL" id="AL050305">
    <property type="status" value="NOT_ANNOTATED_CDS"/>
    <property type="molecule type" value="Genomic_DNA"/>
</dbReference>
<dbReference type="EMBL" id="AL096699">
    <property type="protein sequence ID" value="CAI42225.1"/>
    <property type="molecule type" value="Genomic_DNA"/>
</dbReference>
<dbReference type="EMBL" id="AC004468">
    <property type="protein sequence ID" value="CAI42225.1"/>
    <property type="status" value="JOINED"/>
    <property type="molecule type" value="Genomic_DNA"/>
</dbReference>
<dbReference type="EMBL" id="AC006061">
    <property type="protein sequence ID" value="CAI42225.1"/>
    <property type="status" value="JOINED"/>
    <property type="molecule type" value="Genomic_DNA"/>
</dbReference>
<dbReference type="EMBL" id="AC078958">
    <property type="protein sequence ID" value="CAI42225.1"/>
    <property type="status" value="JOINED"/>
    <property type="molecule type" value="Genomic_DNA"/>
</dbReference>
<dbReference type="EMBL" id="AC079143">
    <property type="protein sequence ID" value="CAI42225.1"/>
    <property type="status" value="JOINED"/>
    <property type="molecule type" value="Genomic_DNA"/>
</dbReference>
<dbReference type="EMBL" id="AC079175">
    <property type="protein sequence ID" value="CAI42225.1"/>
    <property type="status" value="JOINED"/>
    <property type="molecule type" value="Genomic_DNA"/>
</dbReference>
<dbReference type="EMBL" id="AC079177">
    <property type="protein sequence ID" value="CAI42225.1"/>
    <property type="status" value="JOINED"/>
    <property type="molecule type" value="Genomic_DNA"/>
</dbReference>
<dbReference type="EMBL" id="AC079864">
    <property type="protein sequence ID" value="CAI42225.1"/>
    <property type="status" value="JOINED"/>
    <property type="molecule type" value="Genomic_DNA"/>
</dbReference>
<dbReference type="EMBL" id="AC090632">
    <property type="protein sequence ID" value="CAI42225.1"/>
    <property type="status" value="JOINED"/>
    <property type="molecule type" value="Genomic_DNA"/>
</dbReference>
<dbReference type="EMBL" id="AC093167">
    <property type="protein sequence ID" value="CAI42225.1"/>
    <property type="status" value="JOINED"/>
    <property type="molecule type" value="Genomic_DNA"/>
</dbReference>
<dbReference type="EMBL" id="AC093193">
    <property type="protein sequence ID" value="CAI42225.1"/>
    <property type="status" value="JOINED"/>
    <property type="molecule type" value="Genomic_DNA"/>
</dbReference>
<dbReference type="EMBL" id="AC096506">
    <property type="protein sequence ID" value="CAI42225.1"/>
    <property type="status" value="JOINED"/>
    <property type="molecule type" value="Genomic_DNA"/>
</dbReference>
<dbReference type="EMBL" id="AL031542">
    <property type="protein sequence ID" value="CAI42225.1"/>
    <property type="status" value="JOINED"/>
    <property type="molecule type" value="Genomic_DNA"/>
</dbReference>
<dbReference type="EMBL" id="AL031643">
    <property type="protein sequence ID" value="CAI42225.1"/>
    <property type="status" value="JOINED"/>
    <property type="molecule type" value="Genomic_DNA"/>
</dbReference>
<dbReference type="EMBL" id="AL109609">
    <property type="protein sequence ID" value="CAI42225.1"/>
    <property type="status" value="JOINED"/>
    <property type="molecule type" value="Genomic_DNA"/>
</dbReference>
<dbReference type="EMBL" id="AL139278">
    <property type="protein sequence ID" value="CAI42225.1"/>
    <property type="status" value="JOINED"/>
    <property type="molecule type" value="Genomic_DNA"/>
</dbReference>
<dbReference type="EMBL" id="AL451144">
    <property type="protein sequence ID" value="CAI42225.1"/>
    <property type="status" value="JOINED"/>
    <property type="molecule type" value="Genomic_DNA"/>
</dbReference>
<dbReference type="EMBL" id="AL109609">
    <property type="protein sequence ID" value="CAI42950.1"/>
    <property type="molecule type" value="Genomic_DNA"/>
</dbReference>
<dbReference type="EMBL" id="AC004468">
    <property type="protein sequence ID" value="CAI42950.1"/>
    <property type="status" value="JOINED"/>
    <property type="molecule type" value="Genomic_DNA"/>
</dbReference>
<dbReference type="EMBL" id="AC006061">
    <property type="protein sequence ID" value="CAI42950.1"/>
    <property type="status" value="JOINED"/>
    <property type="molecule type" value="Genomic_DNA"/>
</dbReference>
<dbReference type="EMBL" id="AC078958">
    <property type="protein sequence ID" value="CAI42950.1"/>
    <property type="status" value="JOINED"/>
    <property type="molecule type" value="Genomic_DNA"/>
</dbReference>
<dbReference type="EMBL" id="AC079143">
    <property type="protein sequence ID" value="CAI42950.1"/>
    <property type="status" value="JOINED"/>
    <property type="molecule type" value="Genomic_DNA"/>
</dbReference>
<dbReference type="EMBL" id="AC079175">
    <property type="protein sequence ID" value="CAI42950.1"/>
    <property type="status" value="JOINED"/>
    <property type="molecule type" value="Genomic_DNA"/>
</dbReference>
<dbReference type="EMBL" id="AC079177">
    <property type="protein sequence ID" value="CAI42950.1"/>
    <property type="status" value="JOINED"/>
    <property type="molecule type" value="Genomic_DNA"/>
</dbReference>
<dbReference type="EMBL" id="AC079864">
    <property type="protein sequence ID" value="CAI42950.1"/>
    <property type="status" value="JOINED"/>
    <property type="molecule type" value="Genomic_DNA"/>
</dbReference>
<dbReference type="EMBL" id="AC090632">
    <property type="protein sequence ID" value="CAI42950.1"/>
    <property type="status" value="JOINED"/>
    <property type="molecule type" value="Genomic_DNA"/>
</dbReference>
<dbReference type="EMBL" id="AC093167">
    <property type="protein sequence ID" value="CAI42950.1"/>
    <property type="status" value="JOINED"/>
    <property type="molecule type" value="Genomic_DNA"/>
</dbReference>
<dbReference type="EMBL" id="AC093193">
    <property type="protein sequence ID" value="CAI42950.1"/>
    <property type="status" value="JOINED"/>
    <property type="molecule type" value="Genomic_DNA"/>
</dbReference>
<dbReference type="EMBL" id="AC096506">
    <property type="protein sequence ID" value="CAI42950.1"/>
    <property type="status" value="JOINED"/>
    <property type="molecule type" value="Genomic_DNA"/>
</dbReference>
<dbReference type="EMBL" id="AL031542">
    <property type="protein sequence ID" value="CAI42950.1"/>
    <property type="status" value="JOINED"/>
    <property type="molecule type" value="Genomic_DNA"/>
</dbReference>
<dbReference type="EMBL" id="AL031643">
    <property type="protein sequence ID" value="CAI42950.1"/>
    <property type="status" value="JOINED"/>
    <property type="molecule type" value="Genomic_DNA"/>
</dbReference>
<dbReference type="EMBL" id="AL096699">
    <property type="protein sequence ID" value="CAI42950.1"/>
    <property type="status" value="JOINED"/>
    <property type="molecule type" value="Genomic_DNA"/>
</dbReference>
<dbReference type="EMBL" id="AL139278">
    <property type="protein sequence ID" value="CAI42950.1"/>
    <property type="status" value="JOINED"/>
    <property type="molecule type" value="Genomic_DNA"/>
</dbReference>
<dbReference type="EMBL" id="AL451144">
    <property type="protein sequence ID" value="CAI42950.1"/>
    <property type="status" value="JOINED"/>
    <property type="molecule type" value="Genomic_DNA"/>
</dbReference>
<dbReference type="EMBL" id="AL121880">
    <property type="status" value="NOT_ANNOTATED_CDS"/>
    <property type="molecule type" value="Genomic_DNA"/>
</dbReference>
<dbReference type="EMBL" id="AL139278">
    <property type="protein sequence ID" value="CAI42991.1"/>
    <property type="molecule type" value="Genomic_DNA"/>
</dbReference>
<dbReference type="EMBL" id="AC004468">
    <property type="protein sequence ID" value="CAI42991.1"/>
    <property type="status" value="JOINED"/>
    <property type="molecule type" value="Genomic_DNA"/>
</dbReference>
<dbReference type="EMBL" id="AC006061">
    <property type="protein sequence ID" value="CAI42991.1"/>
    <property type="status" value="JOINED"/>
    <property type="molecule type" value="Genomic_DNA"/>
</dbReference>
<dbReference type="EMBL" id="AC078958">
    <property type="protein sequence ID" value="CAI42991.1"/>
    <property type="status" value="JOINED"/>
    <property type="molecule type" value="Genomic_DNA"/>
</dbReference>
<dbReference type="EMBL" id="AC079143">
    <property type="protein sequence ID" value="CAI42991.1"/>
    <property type="status" value="JOINED"/>
    <property type="molecule type" value="Genomic_DNA"/>
</dbReference>
<dbReference type="EMBL" id="AC079175">
    <property type="protein sequence ID" value="CAI42991.1"/>
    <property type="status" value="JOINED"/>
    <property type="molecule type" value="Genomic_DNA"/>
</dbReference>
<dbReference type="EMBL" id="AC079177">
    <property type="protein sequence ID" value="CAI42991.1"/>
    <property type="status" value="JOINED"/>
    <property type="molecule type" value="Genomic_DNA"/>
</dbReference>
<dbReference type="EMBL" id="AC079864">
    <property type="protein sequence ID" value="CAI42991.1"/>
    <property type="status" value="JOINED"/>
    <property type="molecule type" value="Genomic_DNA"/>
</dbReference>
<dbReference type="EMBL" id="AC090632">
    <property type="protein sequence ID" value="CAI42991.1"/>
    <property type="status" value="JOINED"/>
    <property type="molecule type" value="Genomic_DNA"/>
</dbReference>
<dbReference type="EMBL" id="AC093167">
    <property type="protein sequence ID" value="CAI42991.1"/>
    <property type="status" value="JOINED"/>
    <property type="molecule type" value="Genomic_DNA"/>
</dbReference>
<dbReference type="EMBL" id="AC093193">
    <property type="protein sequence ID" value="CAI42991.1"/>
    <property type="status" value="JOINED"/>
    <property type="molecule type" value="Genomic_DNA"/>
</dbReference>
<dbReference type="EMBL" id="AC096506">
    <property type="protein sequence ID" value="CAI42991.1"/>
    <property type="status" value="JOINED"/>
    <property type="molecule type" value="Genomic_DNA"/>
</dbReference>
<dbReference type="EMBL" id="AL031542">
    <property type="protein sequence ID" value="CAI42991.1"/>
    <property type="status" value="JOINED"/>
    <property type="molecule type" value="Genomic_DNA"/>
</dbReference>
<dbReference type="EMBL" id="AL031643">
    <property type="protein sequence ID" value="CAI42991.1"/>
    <property type="status" value="JOINED"/>
    <property type="molecule type" value="Genomic_DNA"/>
</dbReference>
<dbReference type="EMBL" id="AL096699">
    <property type="protein sequence ID" value="CAI42991.1"/>
    <property type="status" value="JOINED"/>
    <property type="molecule type" value="Genomic_DNA"/>
</dbReference>
<dbReference type="EMBL" id="AL109609">
    <property type="protein sequence ID" value="CAI42991.1"/>
    <property type="status" value="JOINED"/>
    <property type="molecule type" value="Genomic_DNA"/>
</dbReference>
<dbReference type="EMBL" id="AL451144">
    <property type="protein sequence ID" value="CAI42991.1"/>
    <property type="status" value="JOINED"/>
    <property type="molecule type" value="Genomic_DNA"/>
</dbReference>
<dbReference type="EMBL" id="AL139401">
    <property type="status" value="NOT_ANNOTATED_CDS"/>
    <property type="molecule type" value="Genomic_DNA"/>
</dbReference>
<dbReference type="EMBL" id="AL451144">
    <property type="protein sequence ID" value="CAI39566.1"/>
    <property type="molecule type" value="Genomic_DNA"/>
</dbReference>
<dbReference type="EMBL" id="AC004468">
    <property type="protein sequence ID" value="CAI39566.1"/>
    <property type="status" value="JOINED"/>
    <property type="molecule type" value="Genomic_DNA"/>
</dbReference>
<dbReference type="EMBL" id="AC006061">
    <property type="protein sequence ID" value="CAI39566.1"/>
    <property type="status" value="JOINED"/>
    <property type="molecule type" value="Genomic_DNA"/>
</dbReference>
<dbReference type="EMBL" id="AC078958">
    <property type="protein sequence ID" value="CAI39566.1"/>
    <property type="status" value="JOINED"/>
    <property type="molecule type" value="Genomic_DNA"/>
</dbReference>
<dbReference type="EMBL" id="AC079143">
    <property type="protein sequence ID" value="CAI39566.1"/>
    <property type="status" value="JOINED"/>
    <property type="molecule type" value="Genomic_DNA"/>
</dbReference>
<dbReference type="EMBL" id="AC079175">
    <property type="protein sequence ID" value="CAI39566.1"/>
    <property type="status" value="JOINED"/>
    <property type="molecule type" value="Genomic_DNA"/>
</dbReference>
<dbReference type="EMBL" id="AC079177">
    <property type="protein sequence ID" value="CAI39566.1"/>
    <property type="status" value="JOINED"/>
    <property type="molecule type" value="Genomic_DNA"/>
</dbReference>
<dbReference type="EMBL" id="AC079864">
    <property type="protein sequence ID" value="CAI39566.1"/>
    <property type="status" value="JOINED"/>
    <property type="molecule type" value="Genomic_DNA"/>
</dbReference>
<dbReference type="EMBL" id="AC090632">
    <property type="protein sequence ID" value="CAI39566.1"/>
    <property type="status" value="JOINED"/>
    <property type="molecule type" value="Genomic_DNA"/>
</dbReference>
<dbReference type="EMBL" id="AC093167">
    <property type="protein sequence ID" value="CAI39566.1"/>
    <property type="status" value="JOINED"/>
    <property type="molecule type" value="Genomic_DNA"/>
</dbReference>
<dbReference type="EMBL" id="AC093193">
    <property type="protein sequence ID" value="CAI39566.1"/>
    <property type="status" value="JOINED"/>
    <property type="molecule type" value="Genomic_DNA"/>
</dbReference>
<dbReference type="EMBL" id="AC096506">
    <property type="protein sequence ID" value="CAI39566.1"/>
    <property type="status" value="JOINED"/>
    <property type="molecule type" value="Genomic_DNA"/>
</dbReference>
<dbReference type="EMBL" id="AL031542">
    <property type="protein sequence ID" value="CAI39566.1"/>
    <property type="status" value="JOINED"/>
    <property type="molecule type" value="Genomic_DNA"/>
</dbReference>
<dbReference type="EMBL" id="AL031643">
    <property type="protein sequence ID" value="CAI39566.1"/>
    <property type="status" value="JOINED"/>
    <property type="molecule type" value="Genomic_DNA"/>
</dbReference>
<dbReference type="EMBL" id="AL096699">
    <property type="protein sequence ID" value="CAI39566.1"/>
    <property type="status" value="JOINED"/>
    <property type="molecule type" value="Genomic_DNA"/>
</dbReference>
<dbReference type="EMBL" id="AL109609">
    <property type="protein sequence ID" value="CAI39566.1"/>
    <property type="status" value="JOINED"/>
    <property type="molecule type" value="Genomic_DNA"/>
</dbReference>
<dbReference type="EMBL" id="AL139278">
    <property type="protein sequence ID" value="CAI39566.1"/>
    <property type="status" value="JOINED"/>
    <property type="molecule type" value="Genomic_DNA"/>
</dbReference>
<dbReference type="EMBL" id="AL596023">
    <property type="status" value="NOT_ANNOTATED_CDS"/>
    <property type="molecule type" value="Genomic_DNA"/>
</dbReference>
<dbReference type="EMBL" id="CH471074">
    <property type="protein sequence ID" value="EAW99065.1"/>
    <property type="molecule type" value="Genomic_DNA"/>
</dbReference>
<dbReference type="EMBL" id="BC028720">
    <property type="protein sequence ID" value="AAH28720.1"/>
    <property type="molecule type" value="mRNA"/>
</dbReference>
<dbReference type="EMBL" id="BC070078">
    <property type="protein sequence ID" value="AAH70078.1"/>
    <property type="molecule type" value="mRNA"/>
</dbReference>
<dbReference type="EMBL" id="BC094758">
    <property type="protein sequence ID" value="AAH94758.1"/>
    <property type="molecule type" value="mRNA"/>
</dbReference>
<dbReference type="EMBL" id="BC127103">
    <property type="protein sequence ID" value="AAI27104.2"/>
    <property type="molecule type" value="mRNA"/>
</dbReference>
<dbReference type="EMBL" id="U27203">
    <property type="protein sequence ID" value="AAA86115.1"/>
    <property type="molecule type" value="Genomic_DNA"/>
</dbReference>
<dbReference type="EMBL" id="U27203">
    <property type="protein sequence ID" value="AAA86116.1"/>
    <property type="molecule type" value="Genomic_DNA"/>
</dbReference>
<dbReference type="EMBL" id="X15148">
    <property type="protein sequence ID" value="CAA33245.1"/>
    <property type="molecule type" value="mRNA"/>
</dbReference>
<dbReference type="EMBL" id="X06178">
    <property type="protein sequence ID" value="CAA29544.1"/>
    <property type="molecule type" value="mRNA"/>
</dbReference>
<dbReference type="EMBL" id="X06179">
    <property type="protein sequence ID" value="CAA29545.1"/>
    <property type="molecule type" value="mRNA"/>
</dbReference>
<dbReference type="EMBL" id="X13045">
    <property type="protein sequence ID" value="CAA31451.1"/>
    <property type="molecule type" value="Genomic_DNA"/>
</dbReference>
<dbReference type="EMBL" id="X13046">
    <property type="protein sequence ID" value="CAA31452.1"/>
    <property type="molecule type" value="Genomic_DNA"/>
</dbReference>
<dbReference type="EMBL" id="X13047">
    <property type="protein sequence ID" value="CAA31453.1"/>
    <property type="molecule type" value="Genomic_DNA"/>
</dbReference>
<dbReference type="EMBL" id="X13048">
    <property type="protein sequence ID" value="CAA31454.1"/>
    <property type="molecule type" value="Genomic_DNA"/>
</dbReference>
<dbReference type="EMBL" id="X15495">
    <property type="protein sequence ID" value="CAA33518.1"/>
    <property type="molecule type" value="Genomic_DNA"/>
</dbReference>
<dbReference type="EMBL" id="X54820">
    <property type="protein sequence ID" value="CAA38589.1"/>
    <property type="molecule type" value="Genomic_DNA"/>
</dbReference>
<dbReference type="CCDS" id="CCDS14229.1">
    <molecule id="P11532-15"/>
</dbReference>
<dbReference type="CCDS" id="CCDS14230.1">
    <molecule id="P11532-16"/>
</dbReference>
<dbReference type="CCDS" id="CCDS14231.1">
    <molecule id="P11532-6"/>
</dbReference>
<dbReference type="CCDS" id="CCDS14232.1">
    <molecule id="P11532-5"/>
</dbReference>
<dbReference type="CCDS" id="CCDS14233.1">
    <molecule id="P11532-1"/>
</dbReference>
<dbReference type="CCDS" id="CCDS14234.1">
    <molecule id="P11532-7"/>
</dbReference>
<dbReference type="CCDS" id="CCDS48091.1">
    <molecule id="P11532-12"/>
</dbReference>
<dbReference type="CCDS" id="CCDS55394.1">
    <molecule id="P11532-13"/>
</dbReference>
<dbReference type="CCDS" id="CCDS55395.1">
    <molecule id="P11532-11"/>
</dbReference>
<dbReference type="CCDS" id="CCDS94585.1">
    <molecule id="P11532-8"/>
</dbReference>
<dbReference type="CCDS" id="CCDS94586.1">
    <molecule id="P11532-3"/>
</dbReference>
<dbReference type="PIR" id="A45255">
    <property type="entry name" value="A45255"/>
</dbReference>
<dbReference type="RefSeq" id="NP_000100.2">
    <molecule id="P11532-4"/>
    <property type="nucleotide sequence ID" value="NM_000109.3"/>
</dbReference>
<dbReference type="RefSeq" id="NP_003997.2">
    <molecule id="P11532-1"/>
    <property type="nucleotide sequence ID" value="NM_004006.3"/>
</dbReference>
<dbReference type="RefSeq" id="NP_004000.1">
    <property type="nucleotide sequence ID" value="NM_004009.3"/>
</dbReference>
<dbReference type="RefSeq" id="NP_004001.1">
    <property type="nucleotide sequence ID" value="NM_004010.3"/>
</dbReference>
<dbReference type="RefSeq" id="NP_004002.2">
    <property type="nucleotide sequence ID" value="NM_004011.3"/>
</dbReference>
<dbReference type="RefSeq" id="NP_004003.2">
    <molecule id="P11532-3"/>
    <property type="nucleotide sequence ID" value="NM_004012.4"/>
</dbReference>
<dbReference type="RefSeq" id="NP_004004.2">
    <molecule id="P11532-12"/>
    <property type="nucleotide sequence ID" value="NM_004013.3"/>
</dbReference>
<dbReference type="RefSeq" id="NP_004005.2">
    <molecule id="P11532-17"/>
    <property type="nucleotide sequence ID" value="NM_004014.3"/>
</dbReference>
<dbReference type="RefSeq" id="NP_004006.1">
    <molecule id="P11532-7"/>
    <property type="nucleotide sequence ID" value="NM_004015.3"/>
</dbReference>
<dbReference type="RefSeq" id="NP_004007.1">
    <molecule id="P11532-6"/>
    <property type="nucleotide sequence ID" value="NM_004016.3"/>
</dbReference>
<dbReference type="RefSeq" id="NP_004008.1">
    <molecule id="P11532-8"/>
    <property type="nucleotide sequence ID" value="NM_004017.3"/>
</dbReference>
<dbReference type="RefSeq" id="NP_004009.1">
    <molecule id="P11532-5"/>
    <property type="nucleotide sequence ID" value="NM_004018.3"/>
</dbReference>
<dbReference type="RefSeq" id="NP_004010.1">
    <molecule id="P11532-18"/>
    <property type="nucleotide sequence ID" value="NM_004019.3"/>
</dbReference>
<dbReference type="RefSeq" id="NP_004011.3">
    <molecule id="P11532-13"/>
    <property type="nucleotide sequence ID" value="NM_004020.4"/>
</dbReference>
<dbReference type="RefSeq" id="NP_004012.2">
    <molecule id="P11532-14"/>
    <property type="nucleotide sequence ID" value="NM_004021.3"/>
</dbReference>
<dbReference type="RefSeq" id="NP_004013.2">
    <molecule id="P11532-15"/>
    <property type="nucleotide sequence ID" value="NM_004022.3"/>
</dbReference>
<dbReference type="RefSeq" id="NP_004014.2">
    <molecule id="P11532-16"/>
    <property type="nucleotide sequence ID" value="NM_004023.3"/>
</dbReference>
<dbReference type="PDB" id="1DXX">
    <property type="method" value="X-ray"/>
    <property type="resolution" value="2.60 A"/>
    <property type="chains" value="A/B/C/D=1-246"/>
</dbReference>
<dbReference type="PDB" id="1EG3">
    <property type="method" value="X-ray"/>
    <property type="resolution" value="2.00 A"/>
    <property type="chains" value="A=3046-3306"/>
</dbReference>
<dbReference type="PDB" id="1EG4">
    <property type="method" value="X-ray"/>
    <property type="resolution" value="2.00 A"/>
    <property type="chains" value="A=3046-3306"/>
</dbReference>
<dbReference type="PDB" id="3UUN">
    <property type="method" value="X-ray"/>
    <property type="resolution" value="2.30 A"/>
    <property type="chains" value="A/B=338-456"/>
</dbReference>
<dbReference type="PDB" id="9D58">
    <property type="method" value="X-ray"/>
    <property type="resolution" value="1.94 A"/>
    <property type="chains" value="A/B/C/D=2-246"/>
</dbReference>
<dbReference type="PDBsum" id="1DXX"/>
<dbReference type="PDBsum" id="1EG3"/>
<dbReference type="PDBsum" id="1EG4"/>
<dbReference type="PDBsum" id="3UUN"/>
<dbReference type="PDBsum" id="9D58"/>
<dbReference type="SASBDB" id="P11532"/>
<dbReference type="SMR" id="P11532"/>
<dbReference type="BioGRID" id="108096">
    <property type="interactions" value="113"/>
</dbReference>
<dbReference type="ComplexPortal" id="CPX-2424">
    <molecule id="P11532-1"/>
    <property type="entry name" value="Dystrophin glycoprotein complex, skeletal muscle variant"/>
</dbReference>
<dbReference type="ComplexPortal" id="CPX-2453">
    <molecule id="P11532-4"/>
    <property type="entry name" value="Dystrophin glycoprotein complex, CNS variant"/>
</dbReference>
<dbReference type="ComplexPortal" id="CPX-2454">
    <molecule id="P11532-2"/>
    <property type="entry name" value="Dystrophin glycoprotein complex, retinal outer plexiform layer variant"/>
</dbReference>
<dbReference type="ComplexPortal" id="CPX-2455">
    <molecule id="P11532-7"/>
    <property type="entry name" value="Dystrophin glycoprotein complex, retinal inner limiting membrane variant"/>
</dbReference>
<dbReference type="DIP" id="DIP-32593N"/>
<dbReference type="FunCoup" id="P11532">
    <property type="interactions" value="420"/>
</dbReference>
<dbReference type="IntAct" id="P11532">
    <property type="interactions" value="74"/>
</dbReference>
<dbReference type="MINT" id="P11532"/>
<dbReference type="STRING" id="9606.ENSP00000354923"/>
<dbReference type="BindingDB" id="P11532"/>
<dbReference type="DrugBank" id="DB05016">
    <property type="generic name" value="Ataluren"/>
</dbReference>
<dbReference type="DrugBank" id="DB13688">
    <property type="generic name" value="Drisapersen"/>
</dbReference>
<dbReference type="DrugBank" id="DB15593">
    <property type="generic name" value="Golodirsen"/>
</dbReference>
<dbReference type="DrugCentral" id="P11532"/>
<dbReference type="TCDB" id="8.A.66.1.2">
    <property type="family name" value="the dystrophin (dystrophin) family"/>
</dbReference>
<dbReference type="CarbonylDB" id="P11532"/>
<dbReference type="GlyGen" id="P11532">
    <property type="glycosylation" value="6 sites, 2 N-linked glycans (2 sites), 1 O-linked glycan (4 sites)"/>
</dbReference>
<dbReference type="iPTMnet" id="P11532"/>
<dbReference type="PhosphoSitePlus" id="P11532"/>
<dbReference type="SwissPalm" id="P11532"/>
<dbReference type="BioMuta" id="DMD"/>
<dbReference type="DMDM" id="313104240"/>
<dbReference type="jPOST" id="P11532"/>
<dbReference type="MassIVE" id="P11532"/>
<dbReference type="PaxDb" id="9606-ENSP00000354923"/>
<dbReference type="PeptideAtlas" id="P11532"/>
<dbReference type="ProteomicsDB" id="17631"/>
<dbReference type="ProteomicsDB" id="17635"/>
<dbReference type="ProteomicsDB" id="17951"/>
<dbReference type="ProteomicsDB" id="19709"/>
<dbReference type="ProteomicsDB" id="19712"/>
<dbReference type="ProteomicsDB" id="25166"/>
<dbReference type="ProteomicsDB" id="29059"/>
<dbReference type="ProteomicsDB" id="52788">
    <molecule id="P11532-1"/>
</dbReference>
<dbReference type="ProteomicsDB" id="52789">
    <molecule id="P11532-2"/>
</dbReference>
<dbReference type="ProteomicsDB" id="52790">
    <molecule id="P11532-3"/>
</dbReference>
<dbReference type="ProteomicsDB" id="52791">
    <molecule id="P11532-4"/>
</dbReference>
<dbReference type="ProteomicsDB" id="52792">
    <molecule id="P11532-5"/>
</dbReference>
<dbReference type="ProteomicsDB" id="52793">
    <molecule id="P11532-6"/>
</dbReference>
<dbReference type="Pumba" id="P11532"/>
<dbReference type="Antibodypedia" id="476">
    <property type="antibodies" value="686 antibodies from 38 providers"/>
</dbReference>
<dbReference type="DNASU" id="1756"/>
<dbReference type="Ensembl" id="ENST00000357033.9">
    <molecule id="P11532-1"/>
    <property type="protein sequence ID" value="ENSP00000354923.3"/>
    <property type="gene ID" value="ENSG00000198947.18"/>
</dbReference>
<dbReference type="Ensembl" id="ENST00000359836.5">
    <molecule id="P11532-15"/>
    <property type="protein sequence ID" value="ENSP00000352894.1"/>
    <property type="gene ID" value="ENSG00000198947.18"/>
</dbReference>
<dbReference type="Ensembl" id="ENST00000361471.8">
    <molecule id="P11532-5"/>
    <property type="protein sequence ID" value="ENSP00000354464.4"/>
    <property type="gene ID" value="ENSG00000198947.18"/>
</dbReference>
<dbReference type="Ensembl" id="ENST00000378677.6">
    <molecule id="P11532-11"/>
    <property type="protein sequence ID" value="ENSP00000367948.2"/>
    <property type="gene ID" value="ENSG00000198947.18"/>
</dbReference>
<dbReference type="Ensembl" id="ENST00000378680.6">
    <molecule id="P11532-9"/>
    <property type="protein sequence ID" value="ENSP00000367951.2"/>
    <property type="gene ID" value="ENSG00000198947.18"/>
</dbReference>
<dbReference type="Ensembl" id="ENST00000378702.8">
    <molecule id="P11532-7"/>
    <property type="protein sequence ID" value="ENSP00000367974.4"/>
    <property type="gene ID" value="ENSG00000198947.18"/>
</dbReference>
<dbReference type="Ensembl" id="ENST00000378707.7">
    <molecule id="P11532-12"/>
    <property type="protein sequence ID" value="ENSP00000367979.3"/>
    <property type="gene ID" value="ENSG00000198947.18"/>
</dbReference>
<dbReference type="Ensembl" id="ENST00000378723.7">
    <molecule id="P11532-6"/>
    <property type="protein sequence ID" value="ENSP00000367997.3"/>
    <property type="gene ID" value="ENSG00000198947.18"/>
</dbReference>
<dbReference type="Ensembl" id="ENST00000474231.5">
    <molecule id="P11532-14"/>
    <property type="protein sequence ID" value="ENSP00000417123.1"/>
    <property type="gene ID" value="ENSG00000198947.18"/>
</dbReference>
<dbReference type="Ensembl" id="ENST00000541735.5">
    <molecule id="P11532-13"/>
    <property type="protein sequence ID" value="ENSP00000444119.1"/>
    <property type="gene ID" value="ENSG00000198947.18"/>
</dbReference>
<dbReference type="Ensembl" id="ENST00000619831.5">
    <molecule id="P11532-3"/>
    <property type="protein sequence ID" value="ENSP00000479270.2"/>
    <property type="gene ID" value="ENSG00000198947.18"/>
</dbReference>
<dbReference type="Ensembl" id="ENST00000682238.1">
    <molecule id="P11532-16"/>
    <property type="protein sequence ID" value="ENSP00000508124.1"/>
    <property type="gene ID" value="ENSG00000198947.18"/>
</dbReference>
<dbReference type="Ensembl" id="ENST00000682600.1">
    <molecule id="P11532-8"/>
    <property type="protein sequence ID" value="ENSP00000507640.1"/>
    <property type="gene ID" value="ENSG00000198947.18"/>
</dbReference>
<dbReference type="GeneID" id="1756"/>
<dbReference type="KEGG" id="hsa:1756"/>
<dbReference type="MANE-Select" id="ENST00000357033.9">
    <property type="protein sequence ID" value="ENSP00000354923.3"/>
    <property type="RefSeq nucleotide sequence ID" value="NM_004006.3"/>
    <property type="RefSeq protein sequence ID" value="NP_003997.2"/>
</dbReference>
<dbReference type="UCSC" id="uc004dcm.2">
    <molecule id="P11532-1"/>
    <property type="organism name" value="human"/>
</dbReference>
<dbReference type="UCSC" id="uc004dcq.1">
    <property type="organism name" value="human"/>
</dbReference>
<dbReference type="UCSC" id="uc004dcr.1">
    <property type="organism name" value="human"/>
</dbReference>
<dbReference type="UCSC" id="uc004dct.1">
    <property type="organism name" value="human"/>
</dbReference>
<dbReference type="UCSC" id="uc004dcu.2">
    <property type="organism name" value="human"/>
</dbReference>
<dbReference type="UCSC" id="uc004dcv.1">
    <property type="organism name" value="human"/>
</dbReference>
<dbReference type="UCSC" id="uc004dcy.2">
    <property type="organism name" value="human"/>
</dbReference>
<dbReference type="AGR" id="HGNC:2928"/>
<dbReference type="CTD" id="1756"/>
<dbReference type="DisGeNET" id="1756"/>
<dbReference type="GeneCards" id="DMD"/>
<dbReference type="GeneReviews" id="DMD"/>
<dbReference type="HGNC" id="HGNC:2928">
    <property type="gene designation" value="DMD"/>
</dbReference>
<dbReference type="HPA" id="ENSG00000198947">
    <property type="expression patterns" value="Low tissue specificity"/>
</dbReference>
<dbReference type="MalaCards" id="DMD"/>
<dbReference type="MIM" id="300376">
    <property type="type" value="phenotype"/>
</dbReference>
<dbReference type="MIM" id="300377">
    <property type="type" value="gene"/>
</dbReference>
<dbReference type="MIM" id="302045">
    <property type="type" value="phenotype"/>
</dbReference>
<dbReference type="MIM" id="310200">
    <property type="type" value="phenotype"/>
</dbReference>
<dbReference type="neXtProt" id="NX_P11532"/>
<dbReference type="OpenTargets" id="ENSG00000198947"/>
<dbReference type="Orphanet" id="98895">
    <property type="disease" value="Becker muscular dystrophy"/>
</dbReference>
<dbReference type="Orphanet" id="98896">
    <property type="disease" value="Duchenne muscular dystrophy"/>
</dbReference>
<dbReference type="Orphanet" id="154">
    <property type="disease" value="Familial isolated dilated cardiomyopathy"/>
</dbReference>
<dbReference type="Orphanet" id="206546">
    <property type="disease" value="Symptomatic form of muscular dystrophy of Duchenne and Becker in female carriers"/>
</dbReference>
<dbReference type="Orphanet" id="777">
    <property type="disease" value="X-linked non-syndromic intellectual disability"/>
</dbReference>
<dbReference type="PharmGKB" id="PA27378"/>
<dbReference type="VEuPathDB" id="HostDB:ENSG00000198947"/>
<dbReference type="eggNOG" id="KOG4286">
    <property type="taxonomic scope" value="Eukaryota"/>
</dbReference>
<dbReference type="GeneTree" id="ENSGT00940000154342"/>
<dbReference type="HOGENOM" id="CLU_001187_1_2_1"/>
<dbReference type="InParanoid" id="P11532"/>
<dbReference type="OMA" id="SACERYT"/>
<dbReference type="OrthoDB" id="10057795at2759"/>
<dbReference type="PAN-GO" id="P11532">
    <property type="GO annotations" value="10 GO annotations based on evolutionary models"/>
</dbReference>
<dbReference type="PhylomeDB" id="P11532"/>
<dbReference type="TreeFam" id="TF320178"/>
<dbReference type="PathwayCommons" id="P11532"/>
<dbReference type="Reactome" id="R-HSA-3000171">
    <property type="pathway name" value="Non-integrin membrane-ECM interactions"/>
</dbReference>
<dbReference type="Reactome" id="R-HSA-390522">
    <property type="pathway name" value="Striated Muscle Contraction"/>
</dbReference>
<dbReference type="Reactome" id="R-HSA-9913351">
    <property type="pathway name" value="Formation of the dystrophin-glycoprotein complex (DGC)"/>
</dbReference>
<dbReference type="SignaLink" id="P11532"/>
<dbReference type="SIGNOR" id="P11532"/>
<dbReference type="BioGRID-ORCS" id="1756">
    <property type="hits" value="10 hits in 785 CRISPR screens"/>
</dbReference>
<dbReference type="ChiTaRS" id="DMD">
    <property type="organism name" value="human"/>
</dbReference>
<dbReference type="EvolutionaryTrace" id="P11532"/>
<dbReference type="GeneWiki" id="Dystrophin"/>
<dbReference type="GenomeRNAi" id="1756"/>
<dbReference type="Pharos" id="P11532">
    <property type="development level" value="Tclin"/>
</dbReference>
<dbReference type="PRO" id="PR:P11532"/>
<dbReference type="Proteomes" id="UP000005640">
    <property type="component" value="Chromosome X"/>
</dbReference>
<dbReference type="RNAct" id="P11532">
    <property type="molecule type" value="protein"/>
</dbReference>
<dbReference type="Bgee" id="ENSG00000198947">
    <property type="expression patterns" value="Expressed in trigeminal ganglion and 203 other cell types or tissues"/>
</dbReference>
<dbReference type="ExpressionAtlas" id="P11532">
    <property type="expression patterns" value="baseline and differential"/>
</dbReference>
<dbReference type="GO" id="GO:0009986">
    <property type="term" value="C:cell surface"/>
    <property type="evidence" value="ECO:0000314"/>
    <property type="project" value="UniProtKB"/>
</dbReference>
<dbReference type="GO" id="GO:0030055">
    <property type="term" value="C:cell-substrate junction"/>
    <property type="evidence" value="ECO:0000250"/>
    <property type="project" value="BHF-UCL"/>
</dbReference>
<dbReference type="GO" id="GO:0043034">
    <property type="term" value="C:costamere"/>
    <property type="evidence" value="ECO:0000314"/>
    <property type="project" value="UniProtKB"/>
</dbReference>
<dbReference type="GO" id="GO:0005856">
    <property type="term" value="C:cytoskeleton"/>
    <property type="evidence" value="ECO:0000304"/>
    <property type="project" value="ProtInc"/>
</dbReference>
<dbReference type="GO" id="GO:0005829">
    <property type="term" value="C:cytosol"/>
    <property type="evidence" value="ECO:0000304"/>
    <property type="project" value="Reactome"/>
</dbReference>
<dbReference type="GO" id="GO:0016010">
    <property type="term" value="C:dystrophin-associated glycoprotein complex"/>
    <property type="evidence" value="ECO:0000314"/>
    <property type="project" value="UniProtKB"/>
</dbReference>
<dbReference type="GO" id="GO:0030175">
    <property type="term" value="C:filopodium"/>
    <property type="evidence" value="ECO:0000314"/>
    <property type="project" value="BHF-UCL"/>
</dbReference>
<dbReference type="GO" id="GO:0031527">
    <property type="term" value="C:filopodium membrane"/>
    <property type="evidence" value="ECO:0000314"/>
    <property type="project" value="BHF-UCL"/>
</dbReference>
<dbReference type="GO" id="GO:0045121">
    <property type="term" value="C:membrane raft"/>
    <property type="evidence" value="ECO:0000250"/>
    <property type="project" value="BHF-UCL"/>
</dbReference>
<dbReference type="GO" id="GO:0044306">
    <property type="term" value="C:neuron projection terminus"/>
    <property type="evidence" value="ECO:0000250"/>
    <property type="project" value="BHF-UCL"/>
</dbReference>
<dbReference type="GO" id="GO:0005634">
    <property type="term" value="C:nucleus"/>
    <property type="evidence" value="ECO:0000314"/>
    <property type="project" value="BHF-UCL"/>
</dbReference>
<dbReference type="GO" id="GO:0005886">
    <property type="term" value="C:plasma membrane"/>
    <property type="evidence" value="ECO:0000304"/>
    <property type="project" value="BHF-UCL"/>
</dbReference>
<dbReference type="GO" id="GO:0045211">
    <property type="term" value="C:postsynaptic membrane"/>
    <property type="evidence" value="ECO:0007669"/>
    <property type="project" value="UniProtKB-SubCell"/>
</dbReference>
<dbReference type="GO" id="GO:0032991">
    <property type="term" value="C:protein-containing complex"/>
    <property type="evidence" value="ECO:0000314"/>
    <property type="project" value="MGI"/>
</dbReference>
<dbReference type="GO" id="GO:0042383">
    <property type="term" value="C:sarcolemma"/>
    <property type="evidence" value="ECO:0000314"/>
    <property type="project" value="BHF-UCL"/>
</dbReference>
<dbReference type="GO" id="GO:0045202">
    <property type="term" value="C:synapse"/>
    <property type="evidence" value="ECO:0000250"/>
    <property type="project" value="BHF-UCL"/>
</dbReference>
<dbReference type="GO" id="GO:0016013">
    <property type="term" value="C:syntrophin complex"/>
    <property type="evidence" value="ECO:0000304"/>
    <property type="project" value="BHF-UCL"/>
</dbReference>
<dbReference type="GO" id="GO:0030018">
    <property type="term" value="C:Z disc"/>
    <property type="evidence" value="ECO:0000250"/>
    <property type="project" value="BHF-UCL"/>
</dbReference>
<dbReference type="GO" id="GO:0003779">
    <property type="term" value="F:actin binding"/>
    <property type="evidence" value="ECO:0000314"/>
    <property type="project" value="BHF-UCL"/>
</dbReference>
<dbReference type="GO" id="GO:0002162">
    <property type="term" value="F:dystroglycan binding"/>
    <property type="evidence" value="ECO:0000353"/>
    <property type="project" value="UniProtKB"/>
</dbReference>
<dbReference type="GO" id="GO:0017022">
    <property type="term" value="F:myosin binding"/>
    <property type="evidence" value="ECO:0000314"/>
    <property type="project" value="BHF-UCL"/>
</dbReference>
<dbReference type="GO" id="GO:0050998">
    <property type="term" value="F:nitric-oxide synthase binding"/>
    <property type="evidence" value="ECO:0000250"/>
    <property type="project" value="BHF-UCL"/>
</dbReference>
<dbReference type="GO" id="GO:0005200">
    <property type="term" value="F:structural constituent of cytoskeleton"/>
    <property type="evidence" value="ECO:0000304"/>
    <property type="project" value="ProtInc"/>
</dbReference>
<dbReference type="GO" id="GO:0008307">
    <property type="term" value="F:structural constituent of muscle"/>
    <property type="evidence" value="ECO:0000314"/>
    <property type="project" value="UniProtKB"/>
</dbReference>
<dbReference type="GO" id="GO:0017166">
    <property type="term" value="F:vinculin binding"/>
    <property type="evidence" value="ECO:0000353"/>
    <property type="project" value="BHF-UCL"/>
</dbReference>
<dbReference type="GO" id="GO:0008270">
    <property type="term" value="F:zinc ion binding"/>
    <property type="evidence" value="ECO:0007669"/>
    <property type="project" value="UniProtKB-KW"/>
</dbReference>
<dbReference type="GO" id="GO:0086001">
    <property type="term" value="P:cardiac muscle cell action potential"/>
    <property type="evidence" value="ECO:0000250"/>
    <property type="project" value="BHF-UCL"/>
</dbReference>
<dbReference type="GO" id="GO:0060048">
    <property type="term" value="P:cardiac muscle contraction"/>
    <property type="evidence" value="ECO:0000315"/>
    <property type="project" value="BHF-UCL"/>
</dbReference>
<dbReference type="GO" id="GO:0035633">
    <property type="term" value="P:maintenance of blood-brain barrier"/>
    <property type="evidence" value="ECO:0000303"/>
    <property type="project" value="ARUK-UCL"/>
</dbReference>
<dbReference type="GO" id="GO:0044458">
    <property type="term" value="P:motile cilium assembly"/>
    <property type="evidence" value="ECO:0000304"/>
    <property type="project" value="BHF-UCL"/>
</dbReference>
<dbReference type="GO" id="GO:0046716">
    <property type="term" value="P:muscle cell cellular homeostasis"/>
    <property type="evidence" value="ECO:0000250"/>
    <property type="project" value="BHF-UCL"/>
</dbReference>
<dbReference type="GO" id="GO:0055001">
    <property type="term" value="P:muscle cell development"/>
    <property type="evidence" value="ECO:0000250"/>
    <property type="project" value="BHF-UCL"/>
</dbReference>
<dbReference type="GO" id="GO:0007517">
    <property type="term" value="P:muscle organ development"/>
    <property type="evidence" value="ECO:0000303"/>
    <property type="project" value="ProtInc"/>
</dbReference>
<dbReference type="GO" id="GO:0048666">
    <property type="term" value="P:neuron development"/>
    <property type="evidence" value="ECO:0000318"/>
    <property type="project" value="GO_Central"/>
</dbReference>
<dbReference type="GO" id="GO:0043043">
    <property type="term" value="P:peptide biosynthetic process"/>
    <property type="evidence" value="ECO:0000314"/>
    <property type="project" value="UniProtKB"/>
</dbReference>
<dbReference type="GO" id="GO:0045666">
    <property type="term" value="P:positive regulation of neuron differentiation"/>
    <property type="evidence" value="ECO:0000315"/>
    <property type="project" value="BHF-UCL"/>
</dbReference>
<dbReference type="GO" id="GO:0010976">
    <property type="term" value="P:positive regulation of neuron projection development"/>
    <property type="evidence" value="ECO:0000315"/>
    <property type="project" value="BHF-UCL"/>
</dbReference>
<dbReference type="GO" id="GO:0008104">
    <property type="term" value="P:protein localization"/>
    <property type="evidence" value="ECO:0000315"/>
    <property type="project" value="BHF-UCL"/>
</dbReference>
<dbReference type="GO" id="GO:0065003">
    <property type="term" value="P:protein-containing complex assembly"/>
    <property type="evidence" value="ECO:0000250"/>
    <property type="project" value="BHF-UCL"/>
</dbReference>
<dbReference type="GO" id="GO:1903169">
    <property type="term" value="P:regulation of calcium ion transmembrane transport"/>
    <property type="evidence" value="ECO:0000250"/>
    <property type="project" value="BHF-UCL"/>
</dbReference>
<dbReference type="GO" id="GO:0010881">
    <property type="term" value="P:regulation of cardiac muscle contraction by regulation of the release of sequestered calcium ion"/>
    <property type="evidence" value="ECO:0000250"/>
    <property type="project" value="BHF-UCL"/>
</dbReference>
<dbReference type="GO" id="GO:0090287">
    <property type="term" value="P:regulation of cellular response to growth factor stimulus"/>
    <property type="evidence" value="ECO:0000315"/>
    <property type="project" value="BHF-UCL"/>
</dbReference>
<dbReference type="GO" id="GO:0002027">
    <property type="term" value="P:regulation of heart rate"/>
    <property type="evidence" value="ECO:0000315"/>
    <property type="project" value="BHF-UCL"/>
</dbReference>
<dbReference type="GO" id="GO:0090257">
    <property type="term" value="P:regulation of muscle system process"/>
    <property type="evidence" value="ECO:0000318"/>
    <property type="project" value="GO_Central"/>
</dbReference>
<dbReference type="GO" id="GO:0010880">
    <property type="term" value="P:regulation of release of sequestered calcium ion into cytosol by sarcoplasmic reticulum"/>
    <property type="evidence" value="ECO:0000250"/>
    <property type="project" value="BHF-UCL"/>
</dbReference>
<dbReference type="GO" id="GO:0014819">
    <property type="term" value="P:regulation of skeletal muscle contraction"/>
    <property type="evidence" value="ECO:0000250"/>
    <property type="project" value="BHF-UCL"/>
</dbReference>
<dbReference type="GO" id="GO:0014809">
    <property type="term" value="P:regulation of skeletal muscle contraction by regulation of release of sequestered calcium ion"/>
    <property type="evidence" value="ECO:0000250"/>
    <property type="project" value="BHF-UCL"/>
</dbReference>
<dbReference type="GO" id="GO:1902305">
    <property type="term" value="P:regulation of sodium ion transmembrane transport"/>
    <property type="evidence" value="ECO:0000250"/>
    <property type="project" value="BHF-UCL"/>
</dbReference>
<dbReference type="GO" id="GO:0035994">
    <property type="term" value="P:response to muscle stretch"/>
    <property type="evidence" value="ECO:0000250"/>
    <property type="project" value="BHF-UCL"/>
</dbReference>
<dbReference type="GO" id="GO:0007519">
    <property type="term" value="P:skeletal muscle tissue development"/>
    <property type="evidence" value="ECO:0000318"/>
    <property type="project" value="GO_Central"/>
</dbReference>
<dbReference type="GO" id="GO:0099536">
    <property type="term" value="P:synaptic signaling"/>
    <property type="evidence" value="ECO:0000318"/>
    <property type="project" value="GO_Central"/>
</dbReference>
<dbReference type="CDD" id="cd21231">
    <property type="entry name" value="CH_DMD_rpt1"/>
    <property type="match status" value="1"/>
</dbReference>
<dbReference type="CDD" id="cd21233">
    <property type="entry name" value="CH_DMD_rpt2"/>
    <property type="match status" value="1"/>
</dbReference>
<dbReference type="CDD" id="cd16246">
    <property type="entry name" value="EFh_DMD"/>
    <property type="match status" value="1"/>
</dbReference>
<dbReference type="CDD" id="cd00176">
    <property type="entry name" value="SPEC"/>
    <property type="match status" value="11"/>
</dbReference>
<dbReference type="CDD" id="cd00201">
    <property type="entry name" value="WW"/>
    <property type="match status" value="1"/>
</dbReference>
<dbReference type="CDD" id="cd02334">
    <property type="entry name" value="ZZ_dystrophin"/>
    <property type="match status" value="1"/>
</dbReference>
<dbReference type="FunFam" id="1.20.58.60:FF:000118">
    <property type="entry name" value="Dystrophin"/>
    <property type="match status" value="1"/>
</dbReference>
<dbReference type="FunFam" id="1.20.58.60:FF:000129">
    <property type="entry name" value="Dystrophin"/>
    <property type="match status" value="1"/>
</dbReference>
<dbReference type="FunFam" id="1.20.58.60:FF:000170">
    <property type="entry name" value="Dystrophin"/>
    <property type="match status" value="1"/>
</dbReference>
<dbReference type="FunFam" id="1.20.58.60:FF:000207">
    <property type="entry name" value="Dystrophin"/>
    <property type="match status" value="1"/>
</dbReference>
<dbReference type="FunFam" id="1.20.58.60:FF:000283">
    <property type="entry name" value="Dystrophin"/>
    <property type="match status" value="1"/>
</dbReference>
<dbReference type="FunFam" id="1.10.238.10:FF:000008">
    <property type="entry name" value="Dystrophin isoform 2"/>
    <property type="match status" value="1"/>
</dbReference>
<dbReference type="FunFam" id="3.30.60.90:FF:000001">
    <property type="entry name" value="Dystrophin isoform 2"/>
    <property type="match status" value="1"/>
</dbReference>
<dbReference type="FunFam" id="1.10.238.10:FF:000023">
    <property type="entry name" value="dystrophin isoform X1"/>
    <property type="match status" value="1"/>
</dbReference>
<dbReference type="FunFam" id="1.20.58.60:FF:000140">
    <property type="entry name" value="dystrophin isoform X1"/>
    <property type="match status" value="1"/>
</dbReference>
<dbReference type="FunFam" id="2.20.70.10:FF:000004">
    <property type="entry name" value="dystrophin isoform X1"/>
    <property type="match status" value="1"/>
</dbReference>
<dbReference type="FunFam" id="1.20.58.60:FF:000091">
    <property type="entry name" value="dystrophin isoform X2"/>
    <property type="match status" value="1"/>
</dbReference>
<dbReference type="FunFam" id="1.20.58.60:FF:000146">
    <property type="entry name" value="dystrophin isoform X2"/>
    <property type="match status" value="1"/>
</dbReference>
<dbReference type="FunFam" id="1.20.58.60:FF:000162">
    <property type="entry name" value="dystrophin isoform X2"/>
    <property type="match status" value="1"/>
</dbReference>
<dbReference type="FunFam" id="1.20.58.60:FF:000183">
    <property type="entry name" value="dystrophin isoform X2"/>
    <property type="match status" value="1"/>
</dbReference>
<dbReference type="FunFam" id="1.20.58.60:FF:000239">
    <property type="entry name" value="dystrophin isoform X2"/>
    <property type="match status" value="1"/>
</dbReference>
<dbReference type="FunFam" id="1.10.418.10:FF:000032">
    <property type="entry name" value="utrophin isoform X1"/>
    <property type="match status" value="1"/>
</dbReference>
<dbReference type="FunFam" id="1.20.58.60:FF:000029">
    <property type="entry name" value="utrophin isoform X1"/>
    <property type="match status" value="1"/>
</dbReference>
<dbReference type="FunFam" id="1.20.58.60:FF:000056">
    <property type="entry name" value="utrophin isoform X1"/>
    <property type="match status" value="1"/>
</dbReference>
<dbReference type="FunFam" id="1.20.58.60:FF:000070">
    <property type="entry name" value="utrophin isoform X1"/>
    <property type="match status" value="1"/>
</dbReference>
<dbReference type="FunFam" id="1.20.58.60:FF:000075">
    <property type="entry name" value="utrophin isoform X1"/>
    <property type="match status" value="1"/>
</dbReference>
<dbReference type="FunFam" id="1.10.418.10:FF:000044">
    <property type="entry name" value="utrophin isoform X2"/>
    <property type="match status" value="1"/>
</dbReference>
<dbReference type="FunFam" id="1.20.58.60:FF:000102">
    <property type="entry name" value="utrophin isoform X2"/>
    <property type="match status" value="1"/>
</dbReference>
<dbReference type="Gene3D" id="1.20.58.60">
    <property type="match status" value="16"/>
</dbReference>
<dbReference type="Gene3D" id="2.20.70.10">
    <property type="match status" value="1"/>
</dbReference>
<dbReference type="Gene3D" id="3.30.60.90">
    <property type="match status" value="1"/>
</dbReference>
<dbReference type="Gene3D" id="1.10.418.10">
    <property type="entry name" value="Calponin-like domain"/>
    <property type="match status" value="2"/>
</dbReference>
<dbReference type="Gene3D" id="1.10.238.10">
    <property type="entry name" value="EF-hand"/>
    <property type="match status" value="2"/>
</dbReference>
<dbReference type="IDEAL" id="IID00267"/>
<dbReference type="InterPro" id="IPR001589">
    <property type="entry name" value="Actinin_actin-bd_CS"/>
</dbReference>
<dbReference type="InterPro" id="IPR001715">
    <property type="entry name" value="CH_dom"/>
</dbReference>
<dbReference type="InterPro" id="IPR036872">
    <property type="entry name" value="CH_dom_sf"/>
</dbReference>
<dbReference type="InterPro" id="IPR035436">
    <property type="entry name" value="Dystrophin/utrophin"/>
</dbReference>
<dbReference type="InterPro" id="IPR011992">
    <property type="entry name" value="EF-hand-dom_pair"/>
</dbReference>
<dbReference type="InterPro" id="IPR015153">
    <property type="entry name" value="EF-hand_dom_typ1"/>
</dbReference>
<dbReference type="InterPro" id="IPR015154">
    <property type="entry name" value="EF-hand_dom_typ2"/>
</dbReference>
<dbReference type="InterPro" id="IPR050774">
    <property type="entry name" value="KCMF1/Dystrophin"/>
</dbReference>
<dbReference type="InterPro" id="IPR018159">
    <property type="entry name" value="Spectrin/alpha-actinin"/>
</dbReference>
<dbReference type="InterPro" id="IPR002017">
    <property type="entry name" value="Spectrin_repeat"/>
</dbReference>
<dbReference type="InterPro" id="IPR001202">
    <property type="entry name" value="WW_dom"/>
</dbReference>
<dbReference type="InterPro" id="IPR036020">
    <property type="entry name" value="WW_dom_sf"/>
</dbReference>
<dbReference type="InterPro" id="IPR000433">
    <property type="entry name" value="Znf_ZZ"/>
</dbReference>
<dbReference type="InterPro" id="IPR043145">
    <property type="entry name" value="Znf_ZZ_sf"/>
</dbReference>
<dbReference type="PANTHER" id="PTHR12268:SF14">
    <property type="entry name" value="DYSTROPHIN-1"/>
    <property type="match status" value="1"/>
</dbReference>
<dbReference type="PANTHER" id="PTHR12268">
    <property type="entry name" value="E3 UBIQUITIN-PROTEIN LIGASE KCMF1"/>
    <property type="match status" value="1"/>
</dbReference>
<dbReference type="Pfam" id="PF00307">
    <property type="entry name" value="CH"/>
    <property type="match status" value="2"/>
</dbReference>
<dbReference type="Pfam" id="PF09068">
    <property type="entry name" value="EF-hand_2"/>
    <property type="match status" value="1"/>
</dbReference>
<dbReference type="Pfam" id="PF09069">
    <property type="entry name" value="EF-hand_3"/>
    <property type="match status" value="1"/>
</dbReference>
<dbReference type="Pfam" id="PF00435">
    <property type="entry name" value="Spectrin"/>
    <property type="match status" value="17"/>
</dbReference>
<dbReference type="Pfam" id="PF00397">
    <property type="entry name" value="WW"/>
    <property type="match status" value="1"/>
</dbReference>
<dbReference type="Pfam" id="PF00569">
    <property type="entry name" value="ZZ"/>
    <property type="match status" value="1"/>
</dbReference>
<dbReference type="PIRSF" id="PIRSF002341">
    <property type="entry name" value="Dystrophin/utrophin"/>
    <property type="match status" value="1"/>
</dbReference>
<dbReference type="SMART" id="SM00033">
    <property type="entry name" value="CH"/>
    <property type="match status" value="2"/>
</dbReference>
<dbReference type="SMART" id="SM00150">
    <property type="entry name" value="SPEC"/>
    <property type="match status" value="22"/>
</dbReference>
<dbReference type="SMART" id="SM00456">
    <property type="entry name" value="WW"/>
    <property type="match status" value="1"/>
</dbReference>
<dbReference type="SMART" id="SM00291">
    <property type="entry name" value="ZnF_ZZ"/>
    <property type="match status" value="1"/>
</dbReference>
<dbReference type="SUPFAM" id="SSF47576">
    <property type="entry name" value="Calponin-homology domain, CH-domain"/>
    <property type="match status" value="1"/>
</dbReference>
<dbReference type="SUPFAM" id="SSF47473">
    <property type="entry name" value="EF-hand"/>
    <property type="match status" value="2"/>
</dbReference>
<dbReference type="SUPFAM" id="SSF57850">
    <property type="entry name" value="RING/U-box"/>
    <property type="match status" value="1"/>
</dbReference>
<dbReference type="SUPFAM" id="SSF46966">
    <property type="entry name" value="Spectrin repeat"/>
    <property type="match status" value="18"/>
</dbReference>
<dbReference type="SUPFAM" id="SSF51045">
    <property type="entry name" value="WW domain"/>
    <property type="match status" value="1"/>
</dbReference>
<dbReference type="PROSITE" id="PS00019">
    <property type="entry name" value="ACTININ_1"/>
    <property type="match status" value="1"/>
</dbReference>
<dbReference type="PROSITE" id="PS00020">
    <property type="entry name" value="ACTININ_2"/>
    <property type="match status" value="1"/>
</dbReference>
<dbReference type="PROSITE" id="PS50021">
    <property type="entry name" value="CH"/>
    <property type="match status" value="2"/>
</dbReference>
<dbReference type="PROSITE" id="PS01159">
    <property type="entry name" value="WW_DOMAIN_1"/>
    <property type="match status" value="1"/>
</dbReference>
<dbReference type="PROSITE" id="PS50020">
    <property type="entry name" value="WW_DOMAIN_2"/>
    <property type="match status" value="1"/>
</dbReference>
<dbReference type="PROSITE" id="PS01357">
    <property type="entry name" value="ZF_ZZ_1"/>
    <property type="match status" value="1"/>
</dbReference>
<dbReference type="PROSITE" id="PS50135">
    <property type="entry name" value="ZF_ZZ_2"/>
    <property type="match status" value="1"/>
</dbReference>
<name>DMD_HUMAN</name>
<organism>
    <name type="scientific">Homo sapiens</name>
    <name type="common">Human</name>
    <dbReference type="NCBI Taxonomy" id="9606"/>
    <lineage>
        <taxon>Eukaryota</taxon>
        <taxon>Metazoa</taxon>
        <taxon>Chordata</taxon>
        <taxon>Craniata</taxon>
        <taxon>Vertebrata</taxon>
        <taxon>Euteleostomi</taxon>
        <taxon>Mammalia</taxon>
        <taxon>Eutheria</taxon>
        <taxon>Euarchontoglires</taxon>
        <taxon>Primates</taxon>
        <taxon>Haplorrhini</taxon>
        <taxon>Catarrhini</taxon>
        <taxon>Hominidae</taxon>
        <taxon>Homo</taxon>
    </lineage>
</organism>